<organism>
    <name type="scientific">Hepatitis C virus genotype 1b (isolate HC-J1)</name>
    <name type="common">HCV</name>
    <dbReference type="NCBI Taxonomy" id="421877"/>
    <lineage>
        <taxon>Viruses</taxon>
        <taxon>Riboviria</taxon>
        <taxon>Orthornavirae</taxon>
        <taxon>Kitrinoviricota</taxon>
        <taxon>Flasuviricetes</taxon>
        <taxon>Amarillovirales</taxon>
        <taxon>Flaviviridae</taxon>
        <taxon>Hepacivirus</taxon>
        <taxon>Hepacivirus hominis</taxon>
    </lineage>
</organism>
<dbReference type="EC" id="3.4.22.-" evidence="4"/>
<dbReference type="EC" id="3.4.21.98" evidence="6"/>
<dbReference type="EC" id="3.6.1.15" evidence="6"/>
<dbReference type="EC" id="3.6.4.13" evidence="6"/>
<dbReference type="EC" id="2.7.7.48" evidence="6"/>
<dbReference type="EMBL" id="D10749">
    <property type="protein sequence ID" value="BAA01582.1"/>
    <property type="molecule type" value="Genomic_RNA"/>
</dbReference>
<dbReference type="PIR" id="PS0326">
    <property type="entry name" value="PS0326"/>
</dbReference>
<dbReference type="PIR" id="PS0327">
    <property type="entry name" value="PS0327"/>
</dbReference>
<dbReference type="PIR" id="PS0328">
    <property type="entry name" value="PS0328"/>
</dbReference>
<dbReference type="PIR" id="S40770">
    <property type="entry name" value="S40770"/>
</dbReference>
<dbReference type="PDB" id="2KNU">
    <property type="method" value="NMR"/>
    <property type="chains" value="A=314-342"/>
</dbReference>
<dbReference type="PDB" id="3MRG">
    <property type="method" value="X-ray"/>
    <property type="resolution" value="1.30 A"/>
    <property type="chains" value="P=1073-1081"/>
</dbReference>
<dbReference type="PDB" id="3MRH">
    <property type="method" value="X-ray"/>
    <property type="resolution" value="2.40 A"/>
    <property type="chains" value="P=1073-1081"/>
</dbReference>
<dbReference type="PDB" id="3MRI">
    <property type="method" value="X-ray"/>
    <property type="resolution" value="2.10 A"/>
    <property type="chains" value="P=1073-1081"/>
</dbReference>
<dbReference type="PDB" id="3MRJ">
    <property type="method" value="X-ray"/>
    <property type="resolution" value="1.87 A"/>
    <property type="chains" value="P=1073-1081"/>
</dbReference>
<dbReference type="PDB" id="3MRL">
    <property type="method" value="X-ray"/>
    <property type="resolution" value="2.41 A"/>
    <property type="chains" value="P=1073-1081"/>
</dbReference>
<dbReference type="PDBsum" id="2KNU"/>
<dbReference type="PDBsum" id="3MRG"/>
<dbReference type="PDBsum" id="3MRH"/>
<dbReference type="PDBsum" id="3MRI"/>
<dbReference type="PDBsum" id="3MRJ"/>
<dbReference type="PDBsum" id="3MRL"/>
<dbReference type="BMRB" id="Q03463"/>
<dbReference type="SMR" id="Q03463"/>
<dbReference type="IntAct" id="Q03463">
    <property type="interactions" value="16"/>
</dbReference>
<dbReference type="MEROPS" id="S29.001"/>
<dbReference type="euHCVdb" id="D10749"/>
<dbReference type="EvolutionaryTrace" id="Q03463"/>
<dbReference type="Proteomes" id="UP000008093">
    <property type="component" value="Genome"/>
</dbReference>
<dbReference type="GO" id="GO:0044167">
    <property type="term" value="C:host cell endoplasmic reticulum membrane"/>
    <property type="evidence" value="ECO:0007669"/>
    <property type="project" value="UniProtKB-SubCell"/>
</dbReference>
<dbReference type="GO" id="GO:0044186">
    <property type="term" value="C:host cell lipid droplet"/>
    <property type="evidence" value="ECO:0007669"/>
    <property type="project" value="UniProtKB-SubCell"/>
</dbReference>
<dbReference type="GO" id="GO:0044191">
    <property type="term" value="C:host cell mitochondrial membrane"/>
    <property type="evidence" value="ECO:0007669"/>
    <property type="project" value="UniProtKB-SubCell"/>
</dbReference>
<dbReference type="GO" id="GO:0042025">
    <property type="term" value="C:host cell nucleus"/>
    <property type="evidence" value="ECO:0007669"/>
    <property type="project" value="UniProtKB-SubCell"/>
</dbReference>
<dbReference type="GO" id="GO:0044220">
    <property type="term" value="C:host cell perinuclear region of cytoplasm"/>
    <property type="evidence" value="ECO:0007669"/>
    <property type="project" value="UniProtKB-SubCell"/>
</dbReference>
<dbReference type="GO" id="GO:0020002">
    <property type="term" value="C:host cell plasma membrane"/>
    <property type="evidence" value="ECO:0007669"/>
    <property type="project" value="UniProtKB-SubCell"/>
</dbReference>
<dbReference type="GO" id="GO:0016020">
    <property type="term" value="C:membrane"/>
    <property type="evidence" value="ECO:0007669"/>
    <property type="project" value="UniProtKB-KW"/>
</dbReference>
<dbReference type="GO" id="GO:1990904">
    <property type="term" value="C:ribonucleoprotein complex"/>
    <property type="evidence" value="ECO:0007669"/>
    <property type="project" value="UniProtKB-KW"/>
</dbReference>
<dbReference type="GO" id="GO:0019031">
    <property type="term" value="C:viral envelope"/>
    <property type="evidence" value="ECO:0007669"/>
    <property type="project" value="UniProtKB-KW"/>
</dbReference>
<dbReference type="GO" id="GO:0019013">
    <property type="term" value="C:viral nucleocapsid"/>
    <property type="evidence" value="ECO:0007669"/>
    <property type="project" value="UniProtKB-KW"/>
</dbReference>
<dbReference type="GO" id="GO:0055036">
    <property type="term" value="C:virion membrane"/>
    <property type="evidence" value="ECO:0007669"/>
    <property type="project" value="UniProtKB-SubCell"/>
</dbReference>
<dbReference type="GO" id="GO:0005524">
    <property type="term" value="F:ATP binding"/>
    <property type="evidence" value="ECO:0007669"/>
    <property type="project" value="UniProtKB-KW"/>
</dbReference>
<dbReference type="GO" id="GO:0016887">
    <property type="term" value="F:ATP hydrolysis activity"/>
    <property type="evidence" value="ECO:0007669"/>
    <property type="project" value="RHEA"/>
</dbReference>
<dbReference type="GO" id="GO:0015267">
    <property type="term" value="F:channel activity"/>
    <property type="evidence" value="ECO:0007669"/>
    <property type="project" value="UniProtKB-KW"/>
</dbReference>
<dbReference type="GO" id="GO:0004197">
    <property type="term" value="F:cysteine-type endopeptidase activity"/>
    <property type="evidence" value="ECO:0007669"/>
    <property type="project" value="InterPro"/>
</dbReference>
<dbReference type="GO" id="GO:0003723">
    <property type="term" value="F:RNA binding"/>
    <property type="evidence" value="ECO:0007669"/>
    <property type="project" value="UniProtKB-KW"/>
</dbReference>
<dbReference type="GO" id="GO:0003724">
    <property type="term" value="F:RNA helicase activity"/>
    <property type="evidence" value="ECO:0007669"/>
    <property type="project" value="UniProtKB-EC"/>
</dbReference>
<dbReference type="GO" id="GO:0003968">
    <property type="term" value="F:RNA-directed RNA polymerase activity"/>
    <property type="evidence" value="ECO:0007669"/>
    <property type="project" value="UniProtKB-KW"/>
</dbReference>
<dbReference type="GO" id="GO:0004252">
    <property type="term" value="F:serine-type endopeptidase activity"/>
    <property type="evidence" value="ECO:0007669"/>
    <property type="project" value="InterPro"/>
</dbReference>
<dbReference type="GO" id="GO:0017124">
    <property type="term" value="F:SH3 domain binding"/>
    <property type="evidence" value="ECO:0007669"/>
    <property type="project" value="UniProtKB-KW"/>
</dbReference>
<dbReference type="GO" id="GO:0005198">
    <property type="term" value="F:structural molecule activity"/>
    <property type="evidence" value="ECO:0007669"/>
    <property type="project" value="InterPro"/>
</dbReference>
<dbReference type="GO" id="GO:0008270">
    <property type="term" value="F:zinc ion binding"/>
    <property type="evidence" value="ECO:0007669"/>
    <property type="project" value="InterPro"/>
</dbReference>
<dbReference type="GO" id="GO:0075512">
    <property type="term" value="P:clathrin-dependent endocytosis of virus by host cell"/>
    <property type="evidence" value="ECO:0007669"/>
    <property type="project" value="UniProtKB-KW"/>
</dbReference>
<dbReference type="GO" id="GO:0039654">
    <property type="term" value="P:fusion of virus membrane with host endosome membrane"/>
    <property type="evidence" value="ECO:0007669"/>
    <property type="project" value="UniProtKB-KW"/>
</dbReference>
<dbReference type="GO" id="GO:0034220">
    <property type="term" value="P:monoatomic ion transmembrane transport"/>
    <property type="evidence" value="ECO:0007669"/>
    <property type="project" value="UniProtKB-KW"/>
</dbReference>
<dbReference type="GO" id="GO:0010867">
    <property type="term" value="P:positive regulation of triglyceride biosynthetic process"/>
    <property type="evidence" value="ECO:0000314"/>
    <property type="project" value="AgBase"/>
</dbReference>
<dbReference type="GO" id="GO:0006508">
    <property type="term" value="P:proteolysis"/>
    <property type="evidence" value="ECO:0007669"/>
    <property type="project" value="UniProtKB-KW"/>
</dbReference>
<dbReference type="GO" id="GO:0039520">
    <property type="term" value="P:symbiont-mediated activation of host autophagy"/>
    <property type="evidence" value="ECO:0007669"/>
    <property type="project" value="UniProtKB-KW"/>
</dbReference>
<dbReference type="GO" id="GO:0039645">
    <property type="term" value="P:symbiont-mediated perturbation of host cell cycle G1/S transition checkpoint"/>
    <property type="evidence" value="ECO:0007669"/>
    <property type="project" value="UniProtKB-KW"/>
</dbReference>
<dbReference type="GO" id="GO:0039545">
    <property type="term" value="P:symbiont-mediated suppression of host cytoplasmic pattern recognition receptor signaling pathway via inhibition of MAVS activity"/>
    <property type="evidence" value="ECO:0007669"/>
    <property type="project" value="UniProtKB-KW"/>
</dbReference>
<dbReference type="GO" id="GO:0039563">
    <property type="term" value="P:symbiont-mediated suppression of host JAK-STAT cascade via inhibition of STAT1 activity"/>
    <property type="evidence" value="ECO:0007669"/>
    <property type="project" value="UniProtKB-KW"/>
</dbReference>
<dbReference type="GO" id="GO:0039527">
    <property type="term" value="P:symbiont-mediated suppression of host TRAF-mediated signal transduction"/>
    <property type="evidence" value="ECO:0007669"/>
    <property type="project" value="UniProtKB-KW"/>
</dbReference>
<dbReference type="GO" id="GO:0039502">
    <property type="term" value="P:symbiont-mediated suppression of host type I interferon-mediated signaling pathway"/>
    <property type="evidence" value="ECO:0007669"/>
    <property type="project" value="UniProtKB-KW"/>
</dbReference>
<dbReference type="GO" id="GO:0019087">
    <property type="term" value="P:symbiont-mediated transformation of host cell"/>
    <property type="evidence" value="ECO:0007669"/>
    <property type="project" value="InterPro"/>
</dbReference>
<dbReference type="GO" id="GO:0039694">
    <property type="term" value="P:viral RNA genome replication"/>
    <property type="evidence" value="ECO:0007669"/>
    <property type="project" value="InterPro"/>
</dbReference>
<dbReference type="GO" id="GO:0019062">
    <property type="term" value="P:virion attachment to host cell"/>
    <property type="evidence" value="ECO:0007669"/>
    <property type="project" value="UniProtKB-KW"/>
</dbReference>
<dbReference type="CDD" id="cd17931">
    <property type="entry name" value="DEXHc_viral_Ns3"/>
    <property type="match status" value="1"/>
</dbReference>
<dbReference type="CDD" id="cd20903">
    <property type="entry name" value="HCV_p7"/>
    <property type="match status" value="1"/>
</dbReference>
<dbReference type="CDD" id="cd23202">
    <property type="entry name" value="Hepacivirus_RdRp"/>
    <property type="match status" value="1"/>
</dbReference>
<dbReference type="FunFam" id="1.10.820.10:FF:000001">
    <property type="entry name" value="Genome polyprotein"/>
    <property type="match status" value="1"/>
</dbReference>
<dbReference type="FunFam" id="1.20.1280.150:FF:000001">
    <property type="entry name" value="Genome polyprotein"/>
    <property type="match status" value="1"/>
</dbReference>
<dbReference type="FunFam" id="2.20.25.210:FF:000001">
    <property type="entry name" value="Genome polyprotein"/>
    <property type="match status" value="1"/>
</dbReference>
<dbReference type="FunFam" id="2.20.25.220:FF:000001">
    <property type="entry name" value="Genome polyprotein"/>
    <property type="match status" value="1"/>
</dbReference>
<dbReference type="FunFam" id="2.30.30.710:FF:000001">
    <property type="entry name" value="Genome polyprotein"/>
    <property type="match status" value="1"/>
</dbReference>
<dbReference type="FunFam" id="2.40.10.10:FF:000029">
    <property type="entry name" value="Genome polyprotein"/>
    <property type="match status" value="1"/>
</dbReference>
<dbReference type="FunFam" id="3.30.160.890:FF:000001">
    <property type="entry name" value="Genome polyprotein"/>
    <property type="match status" value="1"/>
</dbReference>
<dbReference type="FunFam" id="3.30.70.270:FF:000015">
    <property type="entry name" value="Genome polyprotein"/>
    <property type="match status" value="1"/>
</dbReference>
<dbReference type="FunFam" id="3.40.50.300:FF:000557">
    <property type="entry name" value="Genome polyprotein"/>
    <property type="match status" value="1"/>
</dbReference>
<dbReference type="FunFam" id="3.40.50.300:FF:000717">
    <property type="entry name" value="Genome polyprotein"/>
    <property type="match status" value="1"/>
</dbReference>
<dbReference type="FunFam" id="2.40.10.120:FF:000010">
    <property type="entry name" value="NS3 protease"/>
    <property type="match status" value="1"/>
</dbReference>
<dbReference type="Gene3D" id="2.40.10.120">
    <property type="match status" value="1"/>
</dbReference>
<dbReference type="Gene3D" id="3.30.70.270">
    <property type="match status" value="2"/>
</dbReference>
<dbReference type="Gene3D" id="6.10.250.1610">
    <property type="match status" value="1"/>
</dbReference>
<dbReference type="Gene3D" id="6.10.250.1750">
    <property type="match status" value="1"/>
</dbReference>
<dbReference type="Gene3D" id="6.10.250.2920">
    <property type="match status" value="1"/>
</dbReference>
<dbReference type="Gene3D" id="2.20.25.210">
    <property type="entry name" value="Hepatitis C NS5A, domain 1B"/>
    <property type="match status" value="1"/>
</dbReference>
<dbReference type="Gene3D" id="4.10.710.10">
    <property type="entry name" value="Hepatitis C Virus Capsid Protein, Chain A"/>
    <property type="match status" value="1"/>
</dbReference>
<dbReference type="Gene3D" id="3.30.160.890">
    <property type="entry name" value="Hepatitis C virus envelope glycoprotein E1, chain C"/>
    <property type="match status" value="1"/>
</dbReference>
<dbReference type="Gene3D" id="2.30.30.710">
    <property type="entry name" value="Hepatitis C virus non-structural protein NS2, C-terminal domain"/>
    <property type="match status" value="1"/>
</dbReference>
<dbReference type="Gene3D" id="1.20.1280.150">
    <property type="entry name" value="Hepatitis C virus non-structural protein NS2, N-terminal domain"/>
    <property type="match status" value="1"/>
</dbReference>
<dbReference type="Gene3D" id="2.20.25.220">
    <property type="entry name" value="Hepatitis C virus NS5A, 1B domain"/>
    <property type="match status" value="1"/>
</dbReference>
<dbReference type="Gene3D" id="3.40.50.300">
    <property type="entry name" value="P-loop containing nucleotide triphosphate hydrolases"/>
    <property type="match status" value="2"/>
</dbReference>
<dbReference type="Gene3D" id="1.10.820.10">
    <property type="entry name" value="RNA Helicase Chain A , domain 3"/>
    <property type="match status" value="1"/>
</dbReference>
<dbReference type="Gene3D" id="2.40.10.10">
    <property type="entry name" value="Trypsin-like serine proteases"/>
    <property type="match status" value="1"/>
</dbReference>
<dbReference type="InterPro" id="IPR043502">
    <property type="entry name" value="DNA/RNA_pol_sf"/>
</dbReference>
<dbReference type="InterPro" id="IPR011492">
    <property type="entry name" value="Flavi_DEAD"/>
</dbReference>
<dbReference type="InterPro" id="IPR002521">
    <property type="entry name" value="HCV_Core_C"/>
</dbReference>
<dbReference type="InterPro" id="IPR044896">
    <property type="entry name" value="HCV_core_chain_A"/>
</dbReference>
<dbReference type="InterPro" id="IPR002522">
    <property type="entry name" value="HCV_core_N"/>
</dbReference>
<dbReference type="InterPro" id="IPR002519">
    <property type="entry name" value="HCV_Env"/>
</dbReference>
<dbReference type="InterPro" id="IPR002531">
    <property type="entry name" value="HCV_NS1"/>
</dbReference>
<dbReference type="InterPro" id="IPR002518">
    <property type="entry name" value="HCV_NS2"/>
</dbReference>
<dbReference type="InterPro" id="IPR042205">
    <property type="entry name" value="HCV_NS2_C"/>
</dbReference>
<dbReference type="InterPro" id="IPR042209">
    <property type="entry name" value="HCV_NS2_N"/>
</dbReference>
<dbReference type="InterPro" id="IPR000745">
    <property type="entry name" value="HCV_NS4a"/>
</dbReference>
<dbReference type="InterPro" id="IPR001490">
    <property type="entry name" value="HCV_NS4b"/>
</dbReference>
<dbReference type="InterPro" id="IPR002868">
    <property type="entry name" value="HCV_NS5a"/>
</dbReference>
<dbReference type="InterPro" id="IPR013192">
    <property type="entry name" value="HCV_NS5A_1a"/>
</dbReference>
<dbReference type="InterPro" id="IPR013193">
    <property type="entry name" value="HCV_NS5a_1B_dom"/>
</dbReference>
<dbReference type="InterPro" id="IPR038568">
    <property type="entry name" value="HCV_NS5A_1B_sf"/>
</dbReference>
<dbReference type="InterPro" id="IPR024350">
    <property type="entry name" value="HCV_NS5a_C"/>
</dbReference>
<dbReference type="InterPro" id="IPR049913">
    <property type="entry name" value="HCV_p7"/>
</dbReference>
<dbReference type="InterPro" id="IPR014001">
    <property type="entry name" value="Helicase_ATP-bd"/>
</dbReference>
<dbReference type="InterPro" id="IPR001650">
    <property type="entry name" value="Helicase_C-like"/>
</dbReference>
<dbReference type="InterPro" id="IPR004109">
    <property type="entry name" value="HepC_NS3_protease"/>
</dbReference>
<dbReference type="InterPro" id="IPR054175">
    <property type="entry name" value="NS3_helicase_C"/>
</dbReference>
<dbReference type="InterPro" id="IPR038170">
    <property type="entry name" value="NS5A_1a_sf"/>
</dbReference>
<dbReference type="InterPro" id="IPR027417">
    <property type="entry name" value="P-loop_NTPase"/>
</dbReference>
<dbReference type="InterPro" id="IPR009003">
    <property type="entry name" value="Peptidase_S1_PA"/>
</dbReference>
<dbReference type="InterPro" id="IPR043504">
    <property type="entry name" value="Peptidase_S1_PA_chymotrypsin"/>
</dbReference>
<dbReference type="InterPro" id="IPR043128">
    <property type="entry name" value="Rev_trsase/Diguanyl_cyclase"/>
</dbReference>
<dbReference type="InterPro" id="IPR007094">
    <property type="entry name" value="RNA-dir_pol_PSvirus"/>
</dbReference>
<dbReference type="InterPro" id="IPR002166">
    <property type="entry name" value="RNA_pol_HCV"/>
</dbReference>
<dbReference type="Pfam" id="PF07652">
    <property type="entry name" value="Flavi_DEAD"/>
    <property type="match status" value="1"/>
</dbReference>
<dbReference type="Pfam" id="PF01543">
    <property type="entry name" value="HCV_capsid"/>
    <property type="match status" value="1"/>
</dbReference>
<dbReference type="Pfam" id="PF01542">
    <property type="entry name" value="HCV_core"/>
    <property type="match status" value="1"/>
</dbReference>
<dbReference type="Pfam" id="PF01539">
    <property type="entry name" value="HCV_env"/>
    <property type="match status" value="1"/>
</dbReference>
<dbReference type="Pfam" id="PF01560">
    <property type="entry name" value="HCV_NS1"/>
    <property type="match status" value="1"/>
</dbReference>
<dbReference type="Pfam" id="PF01538">
    <property type="entry name" value="HCV_NS2"/>
    <property type="match status" value="1"/>
</dbReference>
<dbReference type="Pfam" id="PF01006">
    <property type="entry name" value="HCV_NS4a"/>
    <property type="match status" value="1"/>
</dbReference>
<dbReference type="Pfam" id="PF01001">
    <property type="entry name" value="HCV_NS4b"/>
    <property type="match status" value="1"/>
</dbReference>
<dbReference type="Pfam" id="PF01506">
    <property type="entry name" value="HCV_NS5a"/>
    <property type="match status" value="1"/>
</dbReference>
<dbReference type="Pfam" id="PF08300">
    <property type="entry name" value="HCV_NS5a_1a"/>
    <property type="match status" value="1"/>
</dbReference>
<dbReference type="Pfam" id="PF08301">
    <property type="entry name" value="HCV_NS5a_1b"/>
    <property type="match status" value="1"/>
</dbReference>
<dbReference type="Pfam" id="PF12941">
    <property type="entry name" value="HCV_NS5a_C"/>
    <property type="match status" value="1"/>
</dbReference>
<dbReference type="Pfam" id="PF22027">
    <property type="entry name" value="NS3_helicase_C"/>
    <property type="match status" value="1"/>
</dbReference>
<dbReference type="Pfam" id="PF02907">
    <property type="entry name" value="Peptidase_S29"/>
    <property type="match status" value="1"/>
</dbReference>
<dbReference type="Pfam" id="PF00998">
    <property type="entry name" value="RdRP_3"/>
    <property type="match status" value="1"/>
</dbReference>
<dbReference type="SMART" id="SM00487">
    <property type="entry name" value="DEXDc"/>
    <property type="match status" value="1"/>
</dbReference>
<dbReference type="SMART" id="SM00490">
    <property type="entry name" value="HELICc"/>
    <property type="match status" value="1"/>
</dbReference>
<dbReference type="SUPFAM" id="SSF56672">
    <property type="entry name" value="DNA/RNA polymerases"/>
    <property type="match status" value="1"/>
</dbReference>
<dbReference type="SUPFAM" id="SSF52540">
    <property type="entry name" value="P-loop containing nucleoside triphosphate hydrolases"/>
    <property type="match status" value="2"/>
</dbReference>
<dbReference type="SUPFAM" id="SSF50494">
    <property type="entry name" value="Trypsin-like serine proteases"/>
    <property type="match status" value="1"/>
</dbReference>
<dbReference type="PROSITE" id="PS51693">
    <property type="entry name" value="HCV_NS2_PRO"/>
    <property type="match status" value="1"/>
</dbReference>
<dbReference type="PROSITE" id="PS51192">
    <property type="entry name" value="HELICASE_ATP_BIND_1"/>
    <property type="match status" value="1"/>
</dbReference>
<dbReference type="PROSITE" id="PS51194">
    <property type="entry name" value="HELICASE_CTER"/>
    <property type="match status" value="1"/>
</dbReference>
<dbReference type="PROSITE" id="PS51822">
    <property type="entry name" value="HV_PV_NS3_PRO"/>
    <property type="match status" value="1"/>
</dbReference>
<dbReference type="PROSITE" id="PS50507">
    <property type="entry name" value="RDRP_SSRNA_POS"/>
    <property type="match status" value="1"/>
</dbReference>
<keyword id="KW-0002">3D-structure</keyword>
<keyword id="KW-0007">Acetylation</keyword>
<keyword id="KW-1072">Activation of host autophagy by virus</keyword>
<keyword id="KW-0053">Apoptosis</keyword>
<keyword id="KW-0067">ATP-binding</keyword>
<keyword id="KW-0167">Capsid protein</keyword>
<keyword id="KW-1165">Clathrin-mediated endocytosis of virus by host</keyword>
<keyword id="KW-1015">Disulfide bond</keyword>
<keyword id="KW-1170">Fusion of virus membrane with host endosomal membrane</keyword>
<keyword id="KW-1168">Fusion of virus membrane with host membrane</keyword>
<keyword id="KW-1078">G1/S host cell cycle checkpoint dysregulation by virus</keyword>
<keyword id="KW-0325">Glycoprotein</keyword>
<keyword id="KW-0347">Helicase</keyword>
<keyword id="KW-1032">Host cell membrane</keyword>
<keyword id="KW-1035">Host cytoplasm</keyword>
<keyword id="KW-1038">Host endoplasmic reticulum</keyword>
<keyword id="KW-1041">Host lipid droplet</keyword>
<keyword id="KW-1043">Host membrane</keyword>
<keyword id="KW-1045">Host mitochondrion</keyword>
<keyword id="KW-1048">Host nucleus</keyword>
<keyword id="KW-0945">Host-virus interaction</keyword>
<keyword id="KW-0378">Hydrolase</keyword>
<keyword id="KW-1090">Inhibition of host innate immune response by virus</keyword>
<keyword id="KW-1114">Inhibition of host interferon signaling pathway by virus</keyword>
<keyword id="KW-1097">Inhibition of host MAVS by virus</keyword>
<keyword id="KW-1113">Inhibition of host RLR pathway by virus</keyword>
<keyword id="KW-1105">Inhibition of host STAT1 by virus</keyword>
<keyword id="KW-1110">Inhibition of host TRAFs by virus</keyword>
<keyword id="KW-0922">Interferon antiviral system evasion</keyword>
<keyword id="KW-0407">Ion channel</keyword>
<keyword id="KW-0406">Ion transport</keyword>
<keyword id="KW-1017">Isopeptide bond</keyword>
<keyword id="KW-0449">Lipoprotein</keyword>
<keyword id="KW-0460">Magnesium</keyword>
<keyword id="KW-0472">Membrane</keyword>
<keyword id="KW-0479">Metal-binding</keyword>
<keyword id="KW-1121">Modulation of host cell cycle by virus</keyword>
<keyword id="KW-0511">Multifunctional enzyme</keyword>
<keyword id="KW-0547">Nucleotide-binding</keyword>
<keyword id="KW-0548">Nucleotidyltransferase</keyword>
<keyword id="KW-0553">Oncogene</keyword>
<keyword id="KW-0564">Palmitate</keyword>
<keyword id="KW-0597">Phosphoprotein</keyword>
<keyword id="KW-0645">Protease</keyword>
<keyword id="KW-0687">Ribonucleoprotein</keyword>
<keyword id="KW-0694">RNA-binding</keyword>
<keyword id="KW-0696">RNA-directed RNA polymerase</keyword>
<keyword id="KW-0720">Serine protease</keyword>
<keyword id="KW-0729">SH3-binding</keyword>
<keyword id="KW-0788">Thiol protease</keyword>
<keyword id="KW-0804">Transcription</keyword>
<keyword id="KW-0805">Transcription regulation</keyword>
<keyword id="KW-0808">Transferase</keyword>
<keyword id="KW-0812">Transmembrane</keyword>
<keyword id="KW-1133">Transmembrane helix</keyword>
<keyword id="KW-0813">Transport</keyword>
<keyword id="KW-0832">Ubl conjugation</keyword>
<keyword id="KW-1161">Viral attachment to host cell</keyword>
<keyword id="KW-0261">Viral envelope protein</keyword>
<keyword id="KW-0899">Viral immunoevasion</keyword>
<keyword id="KW-1182">Viral ion channel</keyword>
<keyword id="KW-0543">Viral nucleoprotein</keyword>
<keyword id="KW-1162">Viral penetration into host cytoplasm</keyword>
<keyword id="KW-0693">Viral RNA replication</keyword>
<keyword id="KW-0946">Virion</keyword>
<keyword id="KW-1164">Virus endocytosis by host</keyword>
<keyword id="KW-1160">Virus entry into host cell</keyword>
<keyword id="KW-0862">Zinc</keyword>
<reference key="1">
    <citation type="journal article" date="1992" name="Nucleic Acids Res.">
        <title>Full-length nucleotide sequence of a Japanese hepatitis C virus isolate (HC-J1) with high homology to USA isolates.</title>
        <authorList>
            <person name="Okamoto H."/>
            <person name="Kanai N."/>
            <person name="Mishiro S."/>
        </authorList>
    </citation>
    <scope>NUCLEOTIDE SEQUENCE [GENOMIC RNA]</scope>
</reference>
<reference key="2">
    <citation type="journal article" date="2007" name="J. Virol.">
        <title>E6AP ubiquitin ligase mediates ubiquitylation and degradation of hepatitis C virus core protein.</title>
        <authorList>
            <person name="Shirakura M."/>
            <person name="Murakami K."/>
            <person name="Ichimura T."/>
            <person name="Suzuki R."/>
            <person name="Shimoji T."/>
            <person name="Fukuda K."/>
            <person name="Abe K."/>
            <person name="Sato S."/>
            <person name="Fukasawa M."/>
            <person name="Yamakawa Y."/>
            <person name="Nishijima M."/>
            <person name="Moriishi K."/>
            <person name="Matsuura Y."/>
            <person name="Wakita T."/>
            <person name="Suzuki T."/>
            <person name="Howley P.M."/>
            <person name="Miyamura T."/>
            <person name="Shoji I."/>
        </authorList>
    </citation>
    <scope>INTERACTION OF WITH HOST UBE3A (MATURE CORE PROTEIN)</scope>
    <scope>UBIQUITINATION (MATURE CORE PROTEIN)</scope>
</reference>
<evidence type="ECO:0000250" key="1"/>
<evidence type="ECO:0000250" key="2">
    <source>
        <dbReference type="UniProtKB" id="O92972"/>
    </source>
</evidence>
<evidence type="ECO:0000250" key="3">
    <source>
        <dbReference type="UniProtKB" id="P26662"/>
    </source>
</evidence>
<evidence type="ECO:0000250" key="4">
    <source>
        <dbReference type="UniProtKB" id="P26663"/>
    </source>
</evidence>
<evidence type="ECO:0000250" key="5">
    <source>
        <dbReference type="UniProtKB" id="P26664"/>
    </source>
</evidence>
<evidence type="ECO:0000250" key="6">
    <source>
        <dbReference type="UniProtKB" id="P27958"/>
    </source>
</evidence>
<evidence type="ECO:0000250" key="7">
    <source>
        <dbReference type="UniProtKB" id="P29846"/>
    </source>
</evidence>
<evidence type="ECO:0000250" key="8">
    <source>
        <dbReference type="UniProtKB" id="Q01403"/>
    </source>
</evidence>
<evidence type="ECO:0000250" key="9">
    <source>
        <dbReference type="UniProtKB" id="Q5EG65"/>
    </source>
</evidence>
<evidence type="ECO:0000250" key="10">
    <source>
        <dbReference type="UniProtKB" id="Q913V3"/>
    </source>
</evidence>
<evidence type="ECO:0000250" key="11">
    <source>
        <dbReference type="UniProtKB" id="Q99IB8"/>
    </source>
</evidence>
<evidence type="ECO:0000250" key="12">
    <source>
        <dbReference type="UniProtKB" id="Q9WMX2"/>
    </source>
</evidence>
<evidence type="ECO:0000255" key="13"/>
<evidence type="ECO:0000255" key="14">
    <source>
        <dbReference type="PROSITE-ProRule" id="PRU00539"/>
    </source>
</evidence>
<evidence type="ECO:0000255" key="15">
    <source>
        <dbReference type="PROSITE-ProRule" id="PRU00541"/>
    </source>
</evidence>
<evidence type="ECO:0000255" key="16">
    <source>
        <dbReference type="PROSITE-ProRule" id="PRU01030"/>
    </source>
</evidence>
<evidence type="ECO:0000255" key="17">
    <source>
        <dbReference type="PROSITE-ProRule" id="PRU01166"/>
    </source>
</evidence>
<evidence type="ECO:0000256" key="18">
    <source>
        <dbReference type="SAM" id="MobiDB-lite"/>
    </source>
</evidence>
<evidence type="ECO:0000269" key="19">
    <source>
    </source>
</evidence>
<evidence type="ECO:0000305" key="20"/>
<evidence type="ECO:0007829" key="21">
    <source>
        <dbReference type="PDB" id="2KNU"/>
    </source>
</evidence>
<organismHost>
    <name type="scientific">Homo sapiens</name>
    <name type="common">Human</name>
    <dbReference type="NCBI Taxonomy" id="9606"/>
</organismHost>
<comment type="function">
    <molecule>Mature core protein</molecule>
    <text evidence="3 5 6 7 11 20">Packages viral RNA to form a viral nucleocapsid, and promotes virion budding (Probable). Participates in the viral particle production as a result of its interaction with the non-structural protein 5A (By similarity). Binds RNA and may function as a RNA chaperone to induce the RNA structural rearrangements taking place during virus replication (By similarity). Modulates viral translation initiation by interacting with viral IRES and 40S ribosomal subunit (By similarity). Affects various cell signaling pathways, host immunity and lipid metabolism (Probable). Prevents the establishment of cellular antiviral state by blocking the interferon-alpha/beta (IFN-alpha/beta) and IFN-gamma signaling pathways and by blocking the formation of phosphorylated STAT1 and promoting ubiquitin-mediated proteasome-dependent degradation of STAT1 (By similarity). Activates STAT3 leading to cellular transformation (By similarity). Regulates the activity of cellular genes, including c-myc and c-fos (By similarity). May repress the promoter of p53, and sequester CREB3 and SP110 isoform 3/Sp110b in the cytoplasm (By similarity). Represses cell cycle negative regulating factor CDKN1A, thereby interrupting an important check point of normal cell cycle regulation (By similarity). Targets transcription factors involved in the regulation of inflammatory responses and in the immune response: suppresses TNF-induced NF-kappa-B activation, and activates AP-1 (By similarity). Binds to dendritic cells (DCs) via C1QR1, resulting in down-regulation of T-lymphocytes proliferation (By similarity). Alters lipid metabolism by interacting with hepatocellular proteins involved in lipid accumulation and storage (By similarity). Induces up-regulation of FAS promoter activity, and thereby contributes to the increased triglyceride accumulation in hepatocytes (steatosis) (By similarity).</text>
</comment>
<comment type="function">
    <molecule>Envelope glycoprotein E1</molecule>
    <text evidence="6">Forms a heterodimer with envelope glycoprotein E2, which mediates virus attachment to the host cell, virion internalization through clathrin-dependent endocytosis and fusion with host membrane (By similarity). Fusion with the host cell is most likely mediated by both E1 and E2, through conformational rearrangements of the heterodimer required for fusion rather than a classical class II fusion mechanism (By similarity). E1/E2 heterodimer binds host apolipoproteins such as APOB and ApoE thereby forming a lipo-viro-particle (LVP) (By similarity). APOE associated to the LVP allows the initial virus attachment to cell surface receptors such as the heparan sulfate proteoglycans (HSPGs), syndecan-1 (SDC1), syndecan-1 (SDC2), the low-density lipoprotein receptor (LDLR) and scavenger receptor class B type I (SCARB1) (By similarity). The cholesterol transfer activity of SCARB1 allows E2 exposure and binding of E2 to SCARB1 and the tetraspanin CD81 (By similarity). E1/E2 heterodimer binding on CD81 activates the epithelial growth factor receptor (EGFR) signaling pathway (By similarity). Diffusion of the complex E1-E2-EGFR-SCARB1-CD81 to the cell lateral membrane allows further interaction with Claudin 1 (CLDN1) and occludin (OCLN) to finally trigger HCV entry (By similarity).</text>
</comment>
<comment type="function">
    <molecule>Envelope glycoprotein E2</molecule>
    <text evidence="5 6">Forms a heterodimer with envelope glycoprotein E1, which mediates virus attachment to the host cell, virion internalization through clathrin-dependent endocytosis and fusion with host membrane (By similarity). Fusion with the host cell is most likely mediated by both E1 and E2, through conformational rearrangements of the heterodimer required for fusion rather than a classical class II fusion mechanism (By similarity). The interaction between envelope glycoprotein E2 and host apolipoprotein E/APOE allows the proper assembly, maturation and infectivity of the viral particles (By similarity). This interaction is probably promoted via the up-regulation of cellular autophagy by the virus (By similarity). E1/E2 heterodimer binds host apolipoproteins such as APOB and APOE thereby forming a lipo-viro-particle (LVP) (By similarity). APOE associated to the LVP allows the initial virus attachment to cell surface receptors such as the heparan sulfate proteoglycans (HSPGs), syndecan-1 (SDC1), syndecan-1 (SDC2), the low-density lipoprotein receptor (LDLR) and scavenger receptor class B type I (SCARB1) (By similarity). The cholesterol transfer activity of SCARB1 allows E2 exposure and binding of E2 to SCARB1 and the tetraspanin CD81 (By similarity). E1/E2 heterodimer binding on CD81 activates the epithelial growth factor receptor (EGFR) signaling pathway (By similarity). Diffusion of the complex E1-E2-EGFR-SCARB1-CD81 to the cell lateral membrane allows further interaction with Claudin 1 (CLDN1) and occludin (OCLN) to finally trigger HCV entry (By similarity). Inhibits host EIF2AK2/PKR activation, preventing the establishment of an antiviral state (By similarity). Viral ligand for CD209/DC-SIGN and CLEC4M/DC-SIGNR, which are respectively found on dendritic cells (DCs), and on liver sinusoidal endothelial cells and macrophage-like cells of lymph node sinuses (By similarity). These interactions allow the capture of circulating HCV particles by these cells and subsequent facilitated transmission to permissive cells such as hepatocytes and lymphocyte subpopulations (By similarity). The interaction between E2 and host amino acid transporter complex formed by SLC3A2 and SLC7A5/LAT1 may facilitate viral entry into host cell (By similarity).</text>
</comment>
<comment type="function">
    <molecule>Viroporin p7</molecule>
    <text evidence="6 11 20">Ion channel protein that acts as a viroporin and plays an essential role in the assembly, envelopment and secretion of viral particles (By similarity). Regulates the host cell secretory pathway, which induces the intracellular retention of viral glycoproteins and favors assembly of viral particles (By similarity). Creates a pore in acidic organelles and releases Ca(2+) and H(+) in the cytoplasm of infected cells, leading to a productive viral infection (By similarity). High levels of cytoplasmic Ca(2+) may trigger membrane trafficking and transport of viral ER-associated proteins to viroplasms, sites of viral genome replication (Probable). This ionic imbalance induces the assembly of the inflammasome complex, which triggers the maturation of pro-IL-1beta into IL-1beta through the action of caspase-1 (By similarity). Targets also host mitochondria and induces mitochondrial depolarization (By similarity). In addition of its role as a viroporin, acts as a lipid raft adhesion factor (By similarity).</text>
</comment>
<comment type="function">
    <molecule>Protease NS2</molecule>
    <text evidence="4 6">Cysteine protease required for the proteolytic auto-cleavage between the non-structural proteins NS2 and NS3 (By similarity). The N-terminus of NS3 is required for the function of NS2 protease (active region NS2-3) (By similarity). Promotes the initiation of viral particle assembly by mediating the interaction between structural and non-structural proteins (By similarity).</text>
</comment>
<comment type="function">
    <molecule>Serine protease/helicase NS3</molecule>
    <text evidence="6 12">Displays three enzymatic activities: serine protease with a chymotrypsin-like fold, NTPase and RNA helicase (By similarity). NS3 serine protease, in association with NS4A, is responsible for the cleavages of NS3-NS4A, NS4A-NS4B, NS4B-NS5A and NS5A-NS5B (By similarity). The NS3/NS4A complex prevents phosphorylation of host IRF3, thus preventing the establishment of dsRNA induced antiviral state (By similarity). The NS3/NS4A complex induces host amino acid transporter component SLC3A2, thus contributing to HCV propagation (By similarity). NS3 RNA helicase binds to RNA and unwinds both dsDNA and dsRNA in the 3' to 5' direction, and likely resolves RNA complicated stable secondary structures in the template strand (By similarity). Binds a single ATP and catalyzes the unzipping of a single base pair of dsRNA (By similarity). Inhibits host antiviral proteins TBK1 and IRF3 thereby preventing the establishment of an antiviral state (By similarity). Cleaves host MAVS/CARDIF thereby preventing the establishment of an antiviral state (By similarity). Cleaves host TICAM1/TRIF, thereby disrupting TLR3 signaling and preventing the establishment of an antiviral state (By similarity).</text>
</comment>
<comment type="function">
    <molecule>Non-structural protein 4B</molecule>
    <text evidence="6">Induces a specific membrane alteration that serves as a scaffold for the virus replication complex (By similarity). This membrane alteration gives rise to the so-called ER-derived membranous web that contains the replication complex (By similarity). NS4B self-interaction contributes to its function in membranous web formation (By similarity). Promotes host TRIF protein degradation in a CASP8-dependent manner thereby inhibiting host TLR3-mediated interferon signaling (By similarity). Disrupts the interaction between STING and TBK1 contributing to the inhibition of interferon signaling (By similarity).</text>
</comment>
<comment type="function">
    <molecule>Non-structural protein 5A</molecule>
    <text evidence="3 5 6 11 12">Phosphorylated protein that is indispensable for viral replication and assembly (By similarity). Both hypo- and hyperphosphorylated states are required for the viral life cycle (By similarity). The hyperphosphorylated form of NS5A is an inhibitor of viral replication (By similarity). Involved in RNA-binding and especially in binding to the viral genome (By similarity). Zinc is essential for RNA-binding (By similarity). Participates in the viral particle production as a result of its interaction with the mature viral core protein (By similarity). Its interaction with host VAPB may target the viral replication complex to vesicles (By similarity). Down-regulates viral IRES translation initiation (By similarity). Mediates interferon resistance, presumably by interacting with and inhibiting host EIF2AK2/PKR (By similarity). Prevents BIN1-induced apoptosis (By similarity). Acts as a transcriptional activator of some host genes important for viral replication when localized in the nucleus (By similarity). Via the interaction with host PACSIN2, modulates lipid droplet formation in order to promote virion assembly (By similarity). Modulates TNFRSF21/DR6 signaling pathway for viral propagation (By similarity).</text>
</comment>
<comment type="function">
    <molecule>RNA-directed RNA polymerase</molecule>
    <text evidence="6">RNA-dependent RNA polymerase that performs primer-template recognition and RNA synthesis during viral replication. Initiates RNA transcription/replication at a flavin adenine dinucleotide (FAD), resulting in a 5'- FAD cap on viral RNAs. In this way, recognition of viral 5' RNA by host pattern recognition receptors can be bypassed, thereby evading activation of antiviral pathways.</text>
</comment>
<comment type="catalytic activity">
    <molecule>Serine protease/helicase NS3</molecule>
    <reaction evidence="6">
        <text>Hydrolysis of four peptide bonds in the viral precursor polyprotein, commonly with Asp or Glu in the P6 position, Cys or Thr in P1 and Ser or Ala in P1'.</text>
        <dbReference type="EC" id="3.4.21.98"/>
    </reaction>
</comment>
<comment type="catalytic activity">
    <molecule>Serine protease/helicase NS3</molecule>
    <reaction evidence="6">
        <text>a ribonucleoside 5'-triphosphate + H2O = a ribonucleoside 5'-diphosphate + phosphate + H(+)</text>
        <dbReference type="Rhea" id="RHEA:23680"/>
        <dbReference type="ChEBI" id="CHEBI:15377"/>
        <dbReference type="ChEBI" id="CHEBI:15378"/>
        <dbReference type="ChEBI" id="CHEBI:43474"/>
        <dbReference type="ChEBI" id="CHEBI:57930"/>
        <dbReference type="ChEBI" id="CHEBI:61557"/>
        <dbReference type="EC" id="3.6.1.15"/>
    </reaction>
</comment>
<comment type="catalytic activity">
    <molecule>Serine protease/helicase NS3</molecule>
    <reaction evidence="6">
        <text>ATP + H2O = ADP + phosphate + H(+)</text>
        <dbReference type="Rhea" id="RHEA:13065"/>
        <dbReference type="ChEBI" id="CHEBI:15377"/>
        <dbReference type="ChEBI" id="CHEBI:15378"/>
        <dbReference type="ChEBI" id="CHEBI:30616"/>
        <dbReference type="ChEBI" id="CHEBI:43474"/>
        <dbReference type="ChEBI" id="CHEBI:456216"/>
        <dbReference type="EC" id="3.6.4.13"/>
    </reaction>
</comment>
<comment type="catalytic activity">
    <molecule>RNA-directed RNA polymerase</molecule>
    <reaction evidence="14">
        <text>RNA(n) + a ribonucleoside 5'-triphosphate = RNA(n+1) + diphosphate</text>
        <dbReference type="Rhea" id="RHEA:21248"/>
        <dbReference type="Rhea" id="RHEA-COMP:14527"/>
        <dbReference type="Rhea" id="RHEA-COMP:17342"/>
        <dbReference type="ChEBI" id="CHEBI:33019"/>
        <dbReference type="ChEBI" id="CHEBI:61557"/>
        <dbReference type="ChEBI" id="CHEBI:140395"/>
        <dbReference type="EC" id="2.7.7.48"/>
    </reaction>
</comment>
<comment type="cofactor">
    <molecule>Protease NS2</molecule>
    <cofactor evidence="4">
        <name>Zn(2+)</name>
        <dbReference type="ChEBI" id="CHEBI:29105"/>
    </cofactor>
    <text evidence="4">Activity of protease NS2 is dependent on zinc ions and completely inhibited by EDTA. This is probably due to the fact that NS2 protease activity needs NS3 N-terminus that binds a zinc atom (active region NS2-3).</text>
</comment>
<comment type="cofactor">
    <molecule>Serine protease/helicase NS3</molecule>
    <cofactor evidence="4">
        <name>Zn(2+)</name>
        <dbReference type="ChEBI" id="CHEBI:29105"/>
    </cofactor>
    <cofactor evidence="12">
        <name>Mg(2+)</name>
        <dbReference type="ChEBI" id="CHEBI:18420"/>
    </cofactor>
    <text evidence="4 12">Binds 1 zinc ion, which has a structural role (By similarity). The magnesium ion is essential for the helicase activity (By similarity).</text>
</comment>
<comment type="cofactor">
    <molecule>RNA-directed RNA polymerase</molecule>
    <cofactor evidence="4">
        <name>Mg(2+)</name>
        <dbReference type="ChEBI" id="CHEBI:18420"/>
    </cofactor>
    <text evidence="4">Binds 2 magnesium ion that constitute a dinuclear catalytic metal center.</text>
</comment>
<comment type="activity regulation">
    <text evidence="3 6">Inhibited by the antiviral drug hexamethylene amiloride (By similarity). Inhibition by amantadine appears to be genotype-dependent (By similarity). Also inhibited by long-alkyl-chain iminosugar derivatives (By similarity).</text>
</comment>
<comment type="activity regulation">
    <molecule>RNA-directed RNA polymerase</molecule>
    <text evidence="6">Activity is up-regulated by PRK2/PKN2-mediated phosphorylation.</text>
</comment>
<comment type="subunit">
    <molecule>Mature core protein</molecule>
    <text evidence="3 5 6 7 9 11 19">Homooligomer (By similarity). Interacts with E1 (via C-terminus) (By similarity). Interacts with the non-structural protein 5A (By similarity). Interacts (via N-terminus) with host STAT1 (via SH2 domain); this interaction results in decreased STAT1 phosphorylation and ubiquitin-mediated proteasome-dependent STAT1 degradation, leading to decreased IFN-stimulated gene transcription (By similarity). Interacts with host STAT3; this interaction constitutively activates STAT3 (By similarity). Interacts with host LTBR receptor (By similarity). Interacts with host TNFRSF1A receptor and possibly induces apoptosis (By similarity). Interacts with host HNRPK (By similarity). Interacts with host YWHAE (By similarity). Interacts with host UBE3A/E6AP (PubMed:17108031). Interacts with host DDX3X (By similarity). Interacts with host APOA2 (By similarity). Interacts with host RXRA protein (By similarity). Interacts with host SP110 isoform 3/Sp110b; this interaction sequesters the transcriptional corepressor SP110 away from the nucleus (By similarity). Interacts with host CREB3 nuclear transcription protein; this interaction triggers cell transformation (By similarity). Interacts with host ACY3 (By similarity). Interacts with host C1QR1 (By similarity). Interacts with host RBM24; this interaction, which enhances the interaction of the mature core protein with 5'-UTR, may inhibit viral translation and favor replication (By similarity). Interacts with host EIF2AK2/PKR; this interaction induces the autophosphorylation of EIF2AK2 (By similarity). Part of the viral assembly initiation complex composed of NS2, E1, E2, NS3, NS4A, NS5A and the mature core protein (By similarity).</text>
</comment>
<comment type="subunit">
    <molecule>Envelope glycoprotein E1</molecule>
    <text evidence="6 11">Forms a heterodimer with envelope glycoprotein E2 (By similarity). Interacts with mature core protein (By similarity). Interacts with protease NS2 (By similarity). The heterodimer E1/E2 interacts with host CLDN1; this interaction plays a role in viral entry into host cell (By similarity). Interacts with host SPSB2 (via C-terminus) (By similarity). Part of the viral assembly initiation complex composed of NS2, E1, E2, NS3, NS4A, NS5A and the mature core protein (By similarity). Interacts with host NEURL3; this interaction prevents E1 binding to glycoprotein E2 (By similarity).</text>
</comment>
<comment type="subunit">
    <molecule>Envelope glycoprotein E2</molecule>
    <text evidence="6 11 12">Forms a heterodimer with envelope glycoprotein E1 (By similarity). Interacts with host CD81 and SCARB1 receptors; these interactions play a role in viral entry into host cell (By similarity). Interacts with host EIF2AK2/PKR; this interaction inhibits EIF2AK2 and probably allows the virus to evade the innate immune response (By similarity). Interacts with host CD209/DC-SIGN and CLEC4M/DC-SIGNR (By similarity). Interact with host SPCS1; this interaction is essential for viral particle assembly (By similarity). Interacts with protease NS2 (By similarity). The heterodimer E1/E2 interacts with host CLDN1; this interaction plays a role in viral entry into host cell (By similarity). Part of the viral assembly initiation complex composed of NS2, E1, E2, NS3, NS4A, NS5A and the mature core protein (By similarity). Interacts with host SLC3A2/4F2hc; the interaction may facilitate viral entry into host cell (By similarity). Interacts with human PLSCR1 (By similarity).</text>
</comment>
<comment type="subunit">
    <molecule>Viroporin p7</molecule>
    <text evidence="2 6 11">Homohexamer (By similarity). Homoheptamer (By similarity). Interacts with protease NS2 (By similarity).</text>
</comment>
<comment type="subunit">
    <molecule>Protease NS2</molecule>
    <text evidence="6 11">Homodimer (By similarity). Interacts with host SPCS1; this interaction is essential for viral particle assembly (By similarity). Interacts with envelope glycoprotein E1 (By similarity). Interacts with envelope glycoprotein E2 (By similarity). Interacts with viroporin p7 (By similarity). Interacts with serine protease/helicase NS3 (By similarity). Part of the replication complex composed of NS2, NS3, NS4A, NS4B, NS5A and the RNA-directed RNA polymerase embedded in an ER-derived membranous web (By similarity). Part of the viral assembly initiation complex composed of NS2, E1, E2, NS3, NS4A, NS5A and the mature core protein (By similarity).</text>
</comment>
<comment type="subunit">
    <molecule>Serine protease/helicase NS3</molecule>
    <text evidence="4 6 11 12">Interacts with protease NS2 (By similarity). Interacts with non-structural protein 4A; this interaction stabilizes the folding of NS3 serine protease (By similarity). NS3-NS4A interaction is essential for NS3 activation and allows membrane anchorage of the latter (By similarity). NS3/NS4A complex also prevents phosphorylation of host IRF3, thus preventing the establishment of dsRNA induced antiviral state (By similarity). Interacts with host MAVS; this interaction leads to the cleavage and inhibition of host MAVS (By similarity). Interacts with host TICAM1; this interaction leads to the cleavage and inhibition of host TICAM1 (By similarity). Interacts with host TANK-binding kinase/TBK1; this interaction results in the inhibition of the association between TBK1 and IRF3, which leads to the inhibition of IRF3 activation (By similarity). Interacts with host RBM24 (By similarity). Part of the replication complex composed of NS2, NS3, NS4A, NS4B, NS5A and the RNA-directed RNA polymerase embedded in an ER-derived membranous web (By similarity). Part of the viral assembly initiation complex composed of NS2, E1, E2, NS3, NS4A, NS5A and the mature core protein (By similarity).</text>
</comment>
<comment type="subunit">
    <molecule>Non-structural protein 4A</molecule>
    <text evidence="3 4 6 11">Interacts with NS3 serine protease; this interaction stabilizes the folding of NS3 serine protease (By similarity). NS3-NS4A interaction is essential for NS3 activation and allows membrane anchorage of the latter (By similarity). Interacts with non-structural protein 5A (via N-terminus) (By similarity). Part of the replication complex composed of NS2, NS3, NS4A, NS4B, NS5A and the RNA-directed RNA polymerase embedded in an ER-derived membranous web (By similarity). Part of the viral assembly initiation complex composed of NS2, E1, E2, NS3, NS4A, NS5A and the mature core protein (By similarity).</text>
</comment>
<comment type="subunit">
    <molecule>Non-structural protein 4B</molecule>
    <text evidence="6 11">Homomultimer (By similarity). Interacts with non-structural protein NS5A (By similarity). Interacts with host PLA2G4C; this interaction likely initiates the recruitment of replication complexes to lipid droplets (By similarity). Interacts with host STING; this interaction disrupts the interaction between STING and TBK1 thereby suppressing the interferon signaling (By similarity). Part of the replication complex composed of NS2, NS3, NS4A, NS4B, NS5A and the RNA-directed RNA polymerase embedded in an ER-derived membranous web (By similarity).</text>
</comment>
<comment type="subunit">
    <molecule>Non-structural protein 5A</molecule>
    <text evidence="3 4 5 6 11">Monomer. Homodimer; dimerization is required for RNA-binding (By similarity). Interacts with the mature core protein (By similarity). Interacts (via N-terminus) with non-structural protein 4A (By similarity). Interacts with non-structural protein 4B. Interacts (via region D2) with RNA-directed RNA polymerase (By similarity). Part of the viral assembly initiation complex composed of NS2, E1, E2, NS3, NS4A, NS5A and the mature core protein (By similarity). Part of the replication complex composed of NS2, NS3, NS4A, NS4B, NS5A and the RNA-directed RNA polymerase embedded in an ER-derived membranous web (By similarity). Interacts with host GRB2 (By similarity). Interacts with host BIN1 (By similarity). Interacts with host PIK3R1 (By similarity). Interacts with host SRCAP (By similarity). Interacts with host FKBP8 (By similarity). Interacts (via C-terminus) with host VAPB (via MSP domain). Interacts with host EIF2AK2/PKR; this interaction leads to disruption of EIF2AK2 dimerization by NS5A and probably allows the virus to evade the innate immune response. Interacts (via N-terminus) with host PACSIN2 (via N-terminus); this interaction attenuates protein kinase C alpha-mediated phosphorylation of PACSIN2 by disrupting the interaction between PACSIN2 and PRKCA (By similarity). Interacts (via N-terminus) with host SRC kinase (via SH2 domain) (By similarity). Interacts with most Src-family kinases (By similarity). Interacts with host IFI27 and SKP2; promotes the ubiquitin-mediated proteasomal degradation of NS5A (By similarity). Interacts with host GPS2 (By similarity). Interacts with host TNFRSF21; this interaction allows the modulation by the virus of JNK, p38 MAPK, STAT3, and Akt signaling pathways in a DR6-dependent manner. Interacts (via N-terminus) with host CIDEB (via N-terminus); this interaction seems to regulate the association of HCV particles with APOE (By similarity). Interacts with host CHKA/Choline Kinase-alpha; CHKA bridges host PI4KA and NS5A and potentiates NS5A-stimulated PI4KA activity, which then facilitates the targeting of the ternary complex to the ER for viral replication (By similarity). Interacts with host SPSB2 (via C-terminus); this interaction targets NS5A for ubiquitination and degradation (By similarity). Interacts with host RAB18; this interaction may promote the association of NS5A and other replicase components with lipid droplets (By similarity). Interacts (via region D2) with host PPIA/CYPA; the interaction stimulates RNA-binding ability of NS5A and is dependent on the peptidyl-prolyl cis-trans isomerase activity of PPIA/CYPA. Interacts with host TRIM14; this interaction induces the degradation of NS5A (By similarity).</text>
</comment>
<comment type="subunit">
    <molecule>RNA-directed RNA polymerase</molecule>
    <text evidence="6">Homooligomer (By similarity). Interacts with non-structural protein 5A (By similarity). Interacts with host VAPB (By similarity). Interacts with host PRK2/PKN2 (By similarity). Interacts with host HNRNPA1 and SEPT6; these interactions facilitate viral replication (By similarity). Part of the replication complex composed of NS2, NS3, NS4A, NS4B, NS5A and the RNA-directed RNA polymerase (By similarity).</text>
</comment>
<comment type="interaction">
    <interactant intactId="EBI-9159704">
        <id>PRO_0000278730</id>
    </interactant>
    <interactant intactId="EBI-78598">
        <id>P19793</id>
        <label>RXRA</label>
    </interactant>
    <organismsDiffer>true</organismsDiffer>
    <experiments>3</experiments>
</comment>
<comment type="interaction">
    <interactant intactId="EBI-9159693">
        <id>PRO_0000278733</id>
    </interactant>
    <interactant intactId="EBI-9159704">
        <id>PRO_0000278730</id>
        <label>-</label>
        <dbReference type="UniProtKB" id="Q03463"/>
    </interactant>
    <organismsDiffer>false</organismsDiffer>
    <experiments>5</experiments>
</comment>
<comment type="interaction">
    <interactant intactId="EBI-9257330">
        <id>PRO_0000278734</id>
    </interactant>
    <interactant intactId="EBI-9257341">
        <id>Q9NNX6</id>
        <label>CD209</label>
    </interactant>
    <organismsDiffer>true</organismsDiffer>
    <experiments>2</experiments>
</comment>
<comment type="interaction">
    <interactant intactId="EBI-9081620">
        <id>PRO_0000278738</id>
    </interactant>
    <interactant intactId="EBI-9081668">
        <id>PRO_0000278737</id>
        <label>-</label>
        <dbReference type="UniProtKB" id="Q03463"/>
    </interactant>
    <organismsDiffer>false</organismsDiffer>
    <experiments>2</experiments>
</comment>
<comment type="interaction">
    <interactant intactId="EBI-9081620">
        <id>PRO_0000278738</id>
    </interactant>
    <interactant intactId="EBI-357706">
        <id>P12277</id>
        <label>CKB</label>
    </interactant>
    <organismsDiffer>true</organismsDiffer>
    <experiments>3</experiments>
</comment>
<comment type="interaction">
    <interactant intactId="EBI-8803426">
        <id>PRO_0000278740</id>
    </interactant>
    <interactant intactId="EBI-359013">
        <id>Q9P035</id>
        <label>HACD3</label>
    </interactant>
    <organismsDiffer>true</organismsDiffer>
    <experiments>2</experiments>
</comment>
<comment type="interaction">
    <interactant intactId="EBI-8803426">
        <id>PRO_0000278740</id>
    </interactant>
    <interactant intactId="EBI-447677">
        <id>Q99836</id>
        <label>MYD88</label>
    </interactant>
    <organismsDiffer>true</organismsDiffer>
    <experiments>3</experiments>
</comment>
<comment type="interaction">
    <interactant intactId="EBI-8803426">
        <id>PRO_0000278740</id>
    </interactant>
    <interactant intactId="EBI-2211322">
        <id>P11498</id>
        <label>PC</label>
    </interactant>
    <organismsDiffer>true</organismsDiffer>
    <experiments>7</experiments>
</comment>
<comment type="interaction">
    <interactant intactId="EBI-8803426">
        <id>PRO_0000278740</id>
    </interactant>
    <interactant intactId="EBI-1059156">
        <id>Q9P0L0</id>
        <label>VAPA</label>
    </interactant>
    <organismsDiffer>true</organismsDiffer>
    <experiments>4</experiments>
</comment>
<comment type="interaction">
    <interactant intactId="EBI-8803426">
        <id>PRO_0000278740</id>
    </interactant>
    <interactant intactId="EBI-1188298">
        <id>O95292</id>
        <label>VAPB</label>
    </interactant>
    <organismsDiffer>true</organismsDiffer>
    <experiments>6</experiments>
</comment>
<comment type="interaction">
    <interactant intactId="EBI-8803474">
        <id>PRO_0000278741</id>
    </interactant>
    <interactant intactId="EBI-1059156">
        <id>Q9P0L0</id>
        <label>VAPA</label>
    </interactant>
    <organismsDiffer>true</organismsDiffer>
    <experiments>3</experiments>
</comment>
<comment type="interaction">
    <interactant intactId="EBI-8803474">
        <id>PRO_0000278741</id>
    </interactant>
    <interactant intactId="EBI-9350848">
        <id>O95292-1</id>
        <label>VAPB</label>
    </interactant>
    <organismsDiffer>true</organismsDiffer>
    <experiments>2</experiments>
</comment>
<comment type="interaction">
    <interactant intactId="EBI-8803474">
        <id>PRO_0000278741</id>
    </interactant>
    <interactant intactId="EBI-9350855">
        <id>O95292-2</id>
        <label>VAPB</label>
    </interactant>
    <organismsDiffer>true</organismsDiffer>
    <experiments>3</experiments>
</comment>
<comment type="subcellular location">
    <molecule>Core protein precursor</molecule>
    <subcellularLocation>
        <location evidence="5">Host endoplasmic reticulum membrane</location>
        <topology evidence="13">Single-pass membrane protein</topology>
    </subcellularLocation>
    <subcellularLocation>
        <location evidence="5">Host mitochondrion membrane</location>
        <topology evidence="13">Single-pass type I membrane protein</topology>
    </subcellularLocation>
    <text>The C-terminal transmembrane domain of the core protein precursor contains an ER signal leading the nascent polyprotein to the ER membrane.</text>
</comment>
<comment type="subcellular location">
    <molecule>Mature core protein</molecule>
    <subcellularLocation>
        <location evidence="11">Virion</location>
    </subcellularLocation>
    <subcellularLocation>
        <location evidence="11">Host cytoplasm</location>
    </subcellularLocation>
    <subcellularLocation>
        <location evidence="3">Host nucleus</location>
    </subcellularLocation>
    <subcellularLocation>
        <location evidence="11">Host lipid droplet</location>
    </subcellularLocation>
    <text evidence="6">Only a minor proportion of core protein is present in the nucleus (By similarity). Probably present on the surface of lipid droplets (By similarity).</text>
</comment>
<comment type="subcellular location">
    <molecule>Envelope glycoprotein E1</molecule>
    <subcellularLocation>
        <location evidence="20">Virion membrane</location>
        <topology evidence="20">Single-pass type I membrane protein</topology>
    </subcellularLocation>
    <subcellularLocation>
        <location>Host endoplasmic reticulum membrane</location>
        <topology evidence="6">Single-pass type I membrane protein</topology>
    </subcellularLocation>
    <text evidence="6">The C-terminal transmembrane domain acts as a signal sequence and forms a hairpin structure before cleavage by host signal peptidase (By similarity). After cleavage, the membrane sequence is retained at the C-terminus of the protein, serving as ER membrane anchor (By similarity). A reorientation of the second hydrophobic stretch occurs after cleavage producing a single reoriented transmembrane domain (By similarity). These events explain the final topology of the protein (By similarity).</text>
</comment>
<comment type="subcellular location">
    <molecule>Envelope glycoprotein E2</molecule>
    <subcellularLocation>
        <location evidence="20">Virion membrane</location>
        <topology evidence="20">Single-pass type I membrane protein</topology>
    </subcellularLocation>
    <subcellularLocation>
        <location>Host endoplasmic reticulum membrane</location>
        <topology evidence="6">Single-pass type I membrane protein</topology>
    </subcellularLocation>
    <subcellularLocation>
        <location evidence="12">Host lipid droplet</location>
    </subcellularLocation>
    <text evidence="6">The C-terminal transmembrane domain acts as a signal sequence and forms a hairpin structure before cleavage by host signal peptidase (By similarity). After cleavage, the membrane sequence is retained at the C-terminus of the protein, serving as ER membrane anchor (By similarity). A reorientation of the second hydrophobic stretch occurs after cleavage producing a single reoriented transmembrane domain (By similarity). These events explain the final topology of the protein (By similarity).</text>
</comment>
<comment type="subcellular location">
    <molecule>Viroporin p7</molecule>
    <subcellularLocation>
        <location evidence="6">Host endoplasmic reticulum membrane</location>
        <topology evidence="6">Multi-pass membrane protein</topology>
    </subcellularLocation>
    <subcellularLocation>
        <location evidence="6">Host mitochondrion</location>
    </subcellularLocation>
    <subcellularLocation>
        <location evidence="6">Host cell membrane</location>
    </subcellularLocation>
    <text evidence="6">The C-terminus of p7 membrane domain acts as a signal sequence (By similarity). After cleavage by host signal peptidase, the membrane sequence is retained at the C-terminus of the protein, serving as ER membrane anchor (By similarity). ER retention of p7 is leaky and a small fraction reaches the plasma membrane (By similarity).</text>
</comment>
<comment type="subcellular location">
    <molecule>Protease NS2</molecule>
    <subcellularLocation>
        <location evidence="6">Host endoplasmic reticulum membrane</location>
        <topology evidence="6">Multi-pass membrane protein</topology>
    </subcellularLocation>
    <subcellularLocation>
        <location evidence="12">Host lipid droplet</location>
    </subcellularLocation>
    <text evidence="11">Probably present on the surface of lipid droplets.</text>
</comment>
<comment type="subcellular location">
    <molecule>Serine protease/helicase NS3</molecule>
    <subcellularLocation>
        <location evidence="20">Host endoplasmic reticulum membrane</location>
        <topology evidence="20">Peripheral membrane protein</topology>
    </subcellularLocation>
    <text evidence="20">NS3 is associated to the ER membrane through its binding to NS4A.</text>
</comment>
<comment type="subcellular location">
    <molecule>Non-structural protein 4A</molecule>
    <subcellularLocation>
        <location evidence="20">Host endoplasmic reticulum membrane</location>
        <topology evidence="20">Single-pass type I membrane protein</topology>
    </subcellularLocation>
    <text>Host membrane insertion occurs after processing by the NS3 protease.</text>
</comment>
<comment type="subcellular location">
    <molecule>Non-structural protein 4B</molecule>
    <subcellularLocation>
        <location evidence="6">Host endoplasmic reticulum membrane</location>
        <topology evidence="6">Multi-pass membrane protein</topology>
    </subcellularLocation>
    <text evidence="6">A reorientation of the N-terminus into the ER lumen occurs post-translationally.</text>
</comment>
<comment type="subcellular location">
    <molecule>Non-structural protein 5A</molecule>
    <subcellularLocation>
        <location evidence="6">Host endoplasmic reticulum membrane</location>
        <topology evidence="6">Peripheral membrane protein</topology>
    </subcellularLocation>
    <subcellularLocation>
        <location evidence="6">Host cytoplasm</location>
        <location evidence="6">Host perinuclear region</location>
    </subcellularLocation>
    <subcellularLocation>
        <location evidence="3">Host mitochondrion</location>
    </subcellularLocation>
    <subcellularLocation>
        <location evidence="6">Host cytoplasm</location>
    </subcellularLocation>
    <subcellularLocation>
        <location evidence="3">Host nucleus</location>
    </subcellularLocation>
    <subcellularLocation>
        <location evidence="12">Host lipid droplet</location>
    </subcellularLocation>
    <text evidence="3 6">Host membrane insertion occurs after processing by the NS3 protease (By similarity). Localizes at the surface of lipid droplets (By similarity).</text>
</comment>
<comment type="subcellular location">
    <molecule>RNA-directed RNA polymerase</molecule>
    <subcellularLocation>
        <location evidence="6">Host cytoplasm</location>
    </subcellularLocation>
    <subcellularLocation>
        <location>Host endoplasmic reticulum membrane</location>
        <topology evidence="6">Single-pass type IV membrane protein</topology>
    </subcellularLocation>
    <text evidence="6">Host membrane insertion occurs after processing by the NS3 protease.</text>
</comment>
<comment type="domain">
    <molecule>Envelope glycoprotein E1</molecule>
    <text evidence="6">The transmembrane regions of envelope E1 and E2 glycoproteins are involved in heterodimer formation, ER localization, and assembly of these proteins.</text>
</comment>
<comment type="domain">
    <molecule>Envelope glycoprotein E2</molecule>
    <text evidence="4 6">The transmembrane regions of envelope E1 and E2 glycoproteins are involved in heterodimer formation, ER localization, and assembly of these proteins (By similarity). Envelope E2 glycoprotein contain two highly variable regions called hypervariable region 1 and 2 (HVR1 and HVR2) (By similarity). E2 also contain two segments involved in CD81-binding (By similarity). HVR1 is implicated in the SCARB1-mediated cell entry and probably acts as a regulator of the association of particles with lipids (By similarity).</text>
</comment>
<comment type="domain">
    <molecule>Protease NS2</molecule>
    <text evidence="4">The N-terminus of NS3 is required for the catalytic activity of protease NS2 (By similarity). The minimal catalytic region includes the C-terminus of NS2 and the N-terminus NS3 protease domain (active region NS2-3) (By similarity).</text>
</comment>
<comment type="domain">
    <molecule>Serine protease/helicase NS3</molecule>
    <text evidence="3 6">The N-terminal one-third contains the protease activity (By similarity). This region contains a zinc atom that does not belong to the active site, but may play a structural rather than a catalytic role (By similarity). This region is essential for the activity of protease NS2, maybe by contributing to the folding of the latter (By similarity). The NTPase/helicase activity is located in the twothirds C-terminus of NS3, this domain contains the NTPase and RNA-binding regions (By similarity).</text>
</comment>
<comment type="domain">
    <molecule>Non-structural protein 4B</molecule>
    <text evidence="11">Contains a glycine zipper region that critically contributes to the biogenesis of functional ER-derived replication organelles.</text>
</comment>
<comment type="domain">
    <molecule>Non-structural protein 5A</molecule>
    <text evidence="3 6">The N-terminus of NS5A acts as membrane anchor (By similarity). The central part of NS5A contains a variable region called interferon sensitivity determining region (ISDR) and seems to be intrinsically disordered and interacts with NS5B and host EIF2AK2 (By similarity). The C-terminus of NS5A contains a variable region called variable region 3 (V3) (By similarity). ISDR and V3 may be involved in sensitivity and/or resistance to IFN-alpha therapy (By similarity). The C-terminus contains a nuclear localization signal (By similarity). The SH3-binding domain is involved in the interaction with host BIN1, GRB2 and Src-family kinases (By similarity).</text>
</comment>
<comment type="PTM">
    <molecule>Genome polyprotein</molecule>
    <text evidence="5 6">Specific enzymatic cleavages in vivo yield mature proteins (By similarity). The structural proteins, core, E1, E2 and p7 are produced by proteolytic processing by host signal peptidases (By similarity). The core protein precursor is synthesized as a 23 kDa, which is retained in the ER membrane through the hydrophobic signal peptide (By similarity). Cleavage by the signal peptidase releases the 21 kDa mature core protein (By similarity). The cleavage of the core protein precursor occurs between aminoacids 176 and 188 but the exact cleavage site is not known (By similarity). Some degraded forms of the core protein appear as well during the course of infection (By similarity). The other proteins (p7, NS2, NS3, NS4A, NS4B, NS5A and NS5B) are cleaved by the viral proteases (By similarity). Autoprocessing between NS2 and NS3 is mediated by the NS2 cysteine protease catalytic domain and regulated by the NS3 N-terminal domain (By similarity).</text>
</comment>
<comment type="PTM">
    <molecule>Mature core protein</molecule>
    <text evidence="8">Phosphorylated by host PKC and PKA.</text>
</comment>
<comment type="PTM">
    <molecule>Mature core protein</molecule>
    <text evidence="19">Ubiquitinated; mediated by UBE3A and leading to core protein subsequent proteasomal degradation.</text>
</comment>
<comment type="PTM">
    <molecule>Envelope glycoprotein E1</molecule>
    <text evidence="6">Highly N-glycosylated.</text>
</comment>
<comment type="PTM">
    <molecule>Envelope glycoprotein E2</molecule>
    <text evidence="6">Highly N-glycosylated.</text>
</comment>
<comment type="PTM">
    <molecule>Protease NS2</molecule>
    <text evidence="6">Palmitoylation is required for NS2/3 autoprocessing and E2 recruitment to membranes.</text>
</comment>
<comment type="PTM">
    <molecule>Non-structural protein 4B</molecule>
    <text evidence="6">Palmitoylated. This modification may play a role in its polymerization or in protein-protein interactions.</text>
</comment>
<comment type="PTM">
    <molecule>Non-structural protein 5A</molecule>
    <text evidence="3 5">Phosphorylated on serines in a basal form termed p56 (By similarity). p58 is a hyperphosphorylated form of p56 (By similarity). p56 and p58 coexist in the cell in roughly equivalent amounts (By similarity). Hyperphosphorylation is dependent on the presence of NS4A (By similarity). Host CSNK1A1/CKI-alpha or RPS6KB1 kinases may be responsible for NS5A phosphorylation (By similarity).</text>
</comment>
<comment type="PTM">
    <molecule>Non-structural protein 5A</molecule>
    <text evidence="11">Tyrosine phosphorylation is essential for the interaction with host SRC.</text>
</comment>
<comment type="PTM">
    <molecule>RNA-directed RNA polymerase</molecule>
    <text evidence="3">The N-terminus is phosphorylated by host PRK2/PKN2.</text>
</comment>
<comment type="miscellaneous">
    <text evidence="20">Viral particle assembly takes place at the surface of ER-derived membranes in close proximity to lipid droplets. NS2 associates with E1/E2 glycoproteins, NS3 and NS5A, which interacts with the viral RNA and core protein to promote genome encapsidation. The nucleocapsid buds at the ER membrane where E1/E2 glycoproteins are anchored and afterward associate with nascent lipid droplet to acquire APOE and APOC. Secretion of viral particles is probably regulated by viroporin p7.</text>
</comment>
<comment type="miscellaneous">
    <molecule>Non-structural protein 5A</molecule>
    <text evidence="20">Cell culture adaptation of the virus leads to mutations in NS5A, reducing its inhibitory effect on replication.</text>
</comment>
<comment type="miscellaneous">
    <molecule>Mature core protein</molecule>
    <text evidence="3">Exerts viral interference on hepatitis B virus when HCV and HBV coinfect the same cell, by suppressing HBV gene expression, RNA encapsidation and budding.</text>
</comment>
<comment type="similarity">
    <text evidence="20">Belongs to the hepacivirus polyprotein family.</text>
</comment>
<comment type="caution">
    <text evidence="20">The core gene probably also codes for alternative reading frame proteins (ARFPs). Many functions depicted for the core protein might belong to the ARFPs.</text>
</comment>
<accession>Q03463</accession>
<proteinExistence type="evidence at protein level"/>
<sequence length="3011" mass="327117">MSTIPKPQRKTKRNTNRRPQDVKFPGGGQIVGGVYLLPRRGPRLGVRATRKTSERSQPRGRRQPIPKVRRPEGRTWAQPGYPWPLYGNEGCGWAGWLLSPRGSRPSWGPTDPRRRSRNLGKVIDTLTCGFADLMGYIPLVGAPLGGAARALAHGVRVLEDGVNYATGNLPGCSFSIFLLALLSCLTVPASAYQVRNSTGLYHVTNDCPNSSIVYEAHDAILHTPGCVPCVREGNVSRCWVAMTPTVATRDGKLPATQLRRHIDLLVGSATLCSALYVGDLCGSVFLIGQLFTFSPRRHWTTQGCNCSIYPGHITGHRMAWDMMMNWSPTAALVMAQLLRIPQAILDMIAGAHWGVLAGIAYFSMVGNWAKVLVVLLLFAGVDAETIVSGGQAARAMSGLVSLFTPGAKQNIQLINTNGSWHINSTALNCNESLNTGWLAGLIYQHKFNSSGCPERLASCRRLTDFDQGWGPISHANGSGPDQRPYCWHYPPKPCGIVPAKSVCGPVYCFTPSPVVVGTTDRSGAPTYNWGANDTDVFVLNNTRPPLGNWFGCTWMNSTGFTKVCGAPPCVIGGGGNNTLHCPTDCFRKHPEATYSRCGSGPWITPRCLVDYPYRLWHYPCTINYTIFKVRMYVGGVEHRLDAACNWTRGERCDLEDRDRSELSPLLLSTTQWQVLPCSFTTLPALSTGLIHLHQNIVDVQYLYGVGSSIASWAIKWEYVVLLFLLLADARVCSCLWMMLLISQAEAALENLVILNAASLAGTRGLVSFLVFFCFAWYLKGRWVPGAAYALYGMWPLLLLLLALPQRAYALDTEVAASCGGVVLVGLMALTLSPYYKRCISWCLWWLQYFLTRVEAQLHVWVPPLNVRGGRDAVILLMCVVHPTLVFDITKLLLAVLGPLWILQASLLKVPYFVRVQGLLRICALARKMVGGHYVQMAIIKLGALTGTYVYNHLTPLRDWAHNGLRDLAVAVEPVVFSQMETKLITWGADTAACGDIINGLPVSARKGREILLGPADGMVSKGWRLLAPITAYAQQTRGLLGCIITSLTGRDKNQVEGEVQIVSTAAQTFLATCINGVCWTVYHGAGTRTIASPKGPVIQMYTNVDQDLVGWPAPQGARSLTPCTCGSSDLYLVTRHADVIPVRRRGDSRGSLLSPRPISYLKGSSGGPLLCPAGHVVGIFRAAVCTRGVAKAVDFIPVESLETTMRSPVFTDNSSPPAVPQSFQVAHLHAPTGSGKSTKVPAAYAAQGYKVLVLNPSVAATLGFGAYMSKAHGIDPNIRTGVRTITTGSPITYSTYGKFLADGGCSGGAYDIIICDECHSTDATSVLGIGTVLDQAETAGARLVVLATATPPGSITVPHANIEEVALSTTGEIPFYGKAIPLEAIKGGRHLIFCHSKKKCDELAAKLVALGVNAVAYYRGLDVSVIPTSGDVVVVATDALMTGYTGDFDSVIDCNTCVTQTVDFSLDPTFTIETTTLPQDAVSRTQRRGRTGRGKPGIYRFVAPGERPSGMFDSSILCECYDTGCAWYELTPAETTVRLRAYMNTPGLPVCQDHLEFWEGVFTGLTHIDAHFLSQTKQGGENFPYLVAYQATVCARAQAPPPSWDQMWKCLIRLKPTLHGPTPLLYRLGAVQGEVTLTHPVTKYIMTCMSADLEVVTSTWVLVGGVLAALAAYCLSTGCVVIVGRIVLSGRPAIIPDREVLYREFDEMEECSQHLPYIEQGMMLAEQFKQKALGLLQTASRQAEVIAPTVQTNWQKLEAFWAKHMWNFISGIQYLAGLSTLPGNPAIASLMAFTAAVTSPLTTSQTLLFNILGGWVAAQLAAPGAATAFVGSGLAGAAVGSVGLGRVLVDILAGYGAGVAGALVAFKIMSGELPSTEDLVNLLPAILSPGALVVGVVCAAILRRHVGPGEGAVQWMNRLIAFASRGNHVSPTHYVPESDAAARVTAILSSLTVTQLLRRLHQWLSSESTTPCSGSWLRDIWDWICEVLSDFKTWLKTKLMPHLPGIPFVSCQHGYKGVWRGDGIMHTRCHCGAEITGHVKNGTMRIVGPKTCRNMWSGTFPINAYTTGPCTPLPAPNYTFALWRVSAEEYVEIRRVGDFHYVTGMTTDNLKCPCQVPSPEFFTELDGVRLHRFAPPCKPLLREEVSFRVGLHDYPVGSQLPCEPEPDVAVLTSMLTDPSHITAAAAGRRLARGSPPSEASSSASQLSAPSLKATCTINHDSPDAELIEANLLWRQEMGGNITRVESENKVVILDSFDPLVAEEDEREISVPAEILRKSRRFTQALPIWARPDYNPPLIETWKKPNYEPPVVHGCPLPPPQSPPVPPPRKKRTVVLTESTLSTALAELAAKSFGSSSTSGITGDNTTTSSEPAPSGCSPDSDAESYSSMPPLEGEPGDPDLSDGSWSTVSSEAGTEDVVCCSMSYTWTGALITPCAAEEQKLPINALSNSLLRHHNLVYSTTSRSACQRQKKVTFDRLQVLDSHYQDVLKEVKAAASKVKANLLSVEEACSLTPPHSAKSKFGYGAKDVRCHARKAVNHINSVWKDLLEDSVTPIQTTIMAKNEVFCVQPEKGGRKPARLIVFPDLGVRVCEKMALYDVVSKLPPAVMGSSYGFQYSPGQRVEFLVQAWKSKRTPMGFSYDTRCFDSTVTESDIRTEEAIYQCCDLDPQARVAIRSLTERLYVGGPLTNSRGENCGYRRCRASGVLTTSCGNTLTCYIKARAACRAAGLQDCTMLVCGDDLVVICESAGVQEDAASLRAFTEAMTRYSAPPGDPPQPEYDLELITSCSSNVSVAHDGTGKRVYYLTRDPTTPLARAAWETARHTPVNSWLGNIIMFAPTLWARMILMTHFFSVLIARDQLEQALDCEIYGACYSIEPLDLPPIIQRLHGLSAFSLHSYSPGEINRVAACLRKLGVPPLRAWRHRARSVRARLLSRGGRAAICGKYLFNWAVRTKLKLTPIAAAGRLDLSGWFTAGYSGGDIYHSVSHARPRWFWFCLLLLAAGVGIYLLPNR</sequence>
<protein>
    <recommendedName>
        <fullName>Genome polyprotein</fullName>
    </recommendedName>
    <component>
        <recommendedName>
            <fullName>Core protein precursor</fullName>
        </recommendedName>
        <alternativeName>
            <fullName>Capsid protein C</fullName>
        </alternativeName>
        <alternativeName>
            <fullName>p23</fullName>
        </alternativeName>
    </component>
    <component>
        <recommendedName>
            <fullName>Mature core protein</fullName>
        </recommendedName>
        <alternativeName>
            <fullName>p21</fullName>
        </alternativeName>
    </component>
    <component>
        <recommendedName>
            <fullName>Envelope glycoprotein E1</fullName>
        </recommendedName>
        <alternativeName>
            <fullName>gp32</fullName>
        </alternativeName>
        <alternativeName>
            <fullName>gp35</fullName>
        </alternativeName>
    </component>
    <component>
        <recommendedName>
            <fullName>Envelope glycoprotein E2</fullName>
        </recommendedName>
        <alternativeName>
            <fullName>NS1</fullName>
        </alternativeName>
        <alternativeName>
            <fullName>gp68</fullName>
        </alternativeName>
        <alternativeName>
            <fullName>gp70</fullName>
        </alternativeName>
    </component>
    <component>
        <recommendedName>
            <fullName>Viroporin p7</fullName>
        </recommendedName>
    </component>
    <component>
        <recommendedName>
            <fullName>Protease NS2</fullName>
            <shortName>p23</shortName>
            <ecNumber evidence="4">3.4.22.-</ecNumber>
        </recommendedName>
        <alternativeName>
            <fullName>Non-structural protein 2</fullName>
            <shortName>NS2</shortName>
        </alternativeName>
    </component>
    <component>
        <recommendedName>
            <fullName>Serine protease/helicase NS3</fullName>
            <ecNumber evidence="6">3.4.21.98</ecNumber>
            <ecNumber evidence="6">3.6.1.15</ecNumber>
            <ecNumber evidence="6">3.6.4.13</ecNumber>
        </recommendedName>
        <alternativeName>
            <fullName>Hepacivirin</fullName>
        </alternativeName>
        <alternativeName>
            <fullName evidence="6">NS3 helicase</fullName>
        </alternativeName>
        <alternativeName>
            <fullName evidence="6">NS3 protease</fullName>
        </alternativeName>
        <alternativeName>
            <fullName>NS3P</fullName>
        </alternativeName>
        <alternativeName>
            <fullName>Viroporin p70</fullName>
        </alternativeName>
    </component>
    <component>
        <recommendedName>
            <fullName>Non-structural protein 4A</fullName>
            <shortName>NS4A</shortName>
        </recommendedName>
        <alternativeName>
            <fullName>p8</fullName>
        </alternativeName>
    </component>
    <component>
        <recommendedName>
            <fullName>Non-structural protein 4B</fullName>
            <shortName>NS4B</shortName>
        </recommendedName>
        <alternativeName>
            <fullName>p27</fullName>
        </alternativeName>
    </component>
    <component>
        <recommendedName>
            <fullName>Non-structural protein 5A</fullName>
            <shortName>NS5A</shortName>
        </recommendedName>
        <alternativeName>
            <fullName>p56/58</fullName>
        </alternativeName>
    </component>
    <component>
        <recommendedName>
            <fullName>RNA-directed RNA polymerase</fullName>
            <ecNumber evidence="6">2.7.7.48</ecNumber>
        </recommendedName>
        <alternativeName>
            <fullName>NS5B</fullName>
        </alternativeName>
        <alternativeName>
            <fullName>p68</fullName>
        </alternativeName>
    </component>
</protein>
<name>POLG_HCVJ1</name>
<feature type="initiator methionine" description="Removed; by host" evidence="5">
    <location>
        <position position="1"/>
    </location>
</feature>
<feature type="chain" id="PRO_0000450910" description="Genome polyprotein">
    <location>
        <begin position="2"/>
        <end position="3011"/>
    </location>
</feature>
<feature type="chain" id="PRO_0000278730" description="Core protein precursor">
    <location>
        <begin position="2"/>
        <end position="191"/>
    </location>
</feature>
<feature type="chain" id="PRO_0000278731" description="Mature core protein">
    <location>
        <begin position="2"/>
        <end position="177"/>
    </location>
</feature>
<feature type="propeptide" id="PRO_0000278732" description="ER anchor for the core protein, removed in mature form by host signal peptidase">
    <location>
        <begin position="178"/>
        <end position="191"/>
    </location>
</feature>
<feature type="chain" id="PRO_0000278733" description="Envelope glycoprotein E1">
    <location>
        <begin position="192"/>
        <end position="383"/>
    </location>
</feature>
<feature type="chain" id="PRO_0000278734" description="Envelope glycoprotein E2">
    <location>
        <begin position="384"/>
        <end position="746"/>
    </location>
</feature>
<feature type="chain" id="PRO_0000278735" description="Viroporin p7">
    <location>
        <begin position="747"/>
        <end position="809"/>
    </location>
</feature>
<feature type="chain" id="PRO_0000278736" description="Protease NS2" evidence="16">
    <location>
        <begin position="810"/>
        <end position="1026"/>
    </location>
</feature>
<feature type="chain" id="PRO_0000278737" description="Serine protease/helicase NS3">
    <location>
        <begin position="1027"/>
        <end position="1657"/>
    </location>
</feature>
<feature type="chain" id="PRO_0000278738" description="Non-structural protein 4A">
    <location>
        <begin position="1658"/>
        <end position="1711"/>
    </location>
</feature>
<feature type="chain" id="PRO_0000278739" description="Non-structural protein 4B">
    <location>
        <begin position="1712"/>
        <end position="1972"/>
    </location>
</feature>
<feature type="chain" id="PRO_0000278740" description="Non-structural protein 5A">
    <location>
        <begin position="1973"/>
        <end position="2420"/>
    </location>
</feature>
<feature type="chain" id="PRO_0000278741" description="RNA-directed RNA polymerase">
    <location>
        <begin position="2421"/>
        <end position="3011"/>
    </location>
</feature>
<feature type="topological domain" description="Cytoplasmic" evidence="13">
    <location>
        <begin position="2"/>
        <end position="168"/>
    </location>
</feature>
<feature type="transmembrane region" description="Helical" evidence="13">
    <location>
        <begin position="169"/>
        <end position="189"/>
    </location>
</feature>
<feature type="topological domain" description="Lumenal" evidence="6">
    <location>
        <begin position="190"/>
        <end position="358"/>
    </location>
</feature>
<feature type="transmembrane region" description="Helical" evidence="6">
    <location>
        <begin position="359"/>
        <end position="379"/>
    </location>
</feature>
<feature type="topological domain" description="Lumenal" evidence="6">
    <location>
        <begin position="380"/>
        <end position="725"/>
    </location>
</feature>
<feature type="transmembrane region" description="Helical" evidence="6">
    <location>
        <begin position="726"/>
        <end position="746"/>
    </location>
</feature>
<feature type="topological domain" description="Lumenal" evidence="6">
    <location>
        <begin position="747"/>
        <end position="757"/>
    </location>
</feature>
<feature type="transmembrane region" description="Helical" evidence="6">
    <location>
        <begin position="758"/>
        <end position="778"/>
    </location>
</feature>
<feature type="topological domain" description="Cytoplasmic" evidence="6">
    <location>
        <begin position="779"/>
        <end position="781"/>
    </location>
</feature>
<feature type="transmembrane region" description="Helical" evidence="6">
    <location>
        <begin position="782"/>
        <end position="803"/>
    </location>
</feature>
<feature type="topological domain" description="Lumenal" evidence="6">
    <location>
        <begin position="804"/>
        <end position="813"/>
    </location>
</feature>
<feature type="transmembrane region" description="Helical" evidence="12">
    <location>
        <begin position="814"/>
        <end position="834"/>
    </location>
</feature>
<feature type="topological domain" description="Cytoplasmic" evidence="12">
    <location>
        <begin position="835"/>
        <end position="838"/>
    </location>
</feature>
<feature type="transmembrane region" description="Helical" evidence="12">
    <location>
        <begin position="839"/>
        <end position="859"/>
    </location>
</feature>
<feature type="topological domain" description="Lumenal" evidence="12">
    <location>
        <begin position="860"/>
        <end position="881"/>
    </location>
</feature>
<feature type="transmembrane region" description="Helical" evidence="12">
    <location>
        <begin position="882"/>
        <end position="902"/>
    </location>
</feature>
<feature type="topological domain" description="Cytoplasmic" evidence="12">
    <location>
        <begin position="903"/>
        <end position="1657"/>
    </location>
</feature>
<feature type="transmembrane region" description="Helical" evidence="13">
    <location>
        <begin position="1658"/>
        <end position="1678"/>
    </location>
</feature>
<feature type="topological domain" description="Cytoplasmic" evidence="13">
    <location>
        <begin position="1679"/>
        <end position="1805"/>
    </location>
</feature>
<feature type="transmembrane region" description="Helical" evidence="13">
    <location>
        <begin position="1806"/>
        <end position="1824"/>
    </location>
</feature>
<feature type="topological domain" description="Lumenal" evidence="6">
    <location>
        <begin position="1825"/>
        <end position="1828"/>
    </location>
</feature>
<feature type="transmembrane region" description="Helical" evidence="13">
    <location>
        <begin position="1829"/>
        <end position="1849"/>
    </location>
</feature>
<feature type="topological domain" description="Cytoplasmic" evidence="13">
    <location>
        <position position="1850"/>
    </location>
</feature>
<feature type="transmembrane region" description="Helical" evidence="13">
    <location>
        <begin position="1851"/>
        <end position="1871"/>
    </location>
</feature>
<feature type="topological domain" description="Lumenal" evidence="13">
    <location>
        <begin position="1872"/>
        <end position="1881"/>
    </location>
</feature>
<feature type="transmembrane region" description="Helical" evidence="13">
    <location>
        <begin position="1882"/>
        <end position="1902"/>
    </location>
</feature>
<feature type="topological domain" description="Cytoplasmic" evidence="13">
    <location>
        <begin position="1903"/>
        <end position="1972"/>
    </location>
</feature>
<feature type="intramembrane region" evidence="6">
    <location>
        <begin position="1973"/>
        <end position="2002"/>
    </location>
</feature>
<feature type="topological domain" description="Cytoplasmic" evidence="6">
    <location>
        <begin position="2003"/>
        <end position="2990"/>
    </location>
</feature>
<feature type="transmembrane region" description="Helical" evidence="6">
    <location>
        <begin position="2991"/>
        <end position="3011"/>
    </location>
</feature>
<feature type="domain" description="Peptidase C18" evidence="16">
    <location>
        <begin position="903"/>
        <end position="1026"/>
    </location>
</feature>
<feature type="domain" description="Peptidase S29" evidence="17">
    <location>
        <begin position="1027"/>
        <end position="1208"/>
    </location>
</feature>
<feature type="domain" description="Helicase ATP-binding" evidence="15">
    <location>
        <begin position="1217"/>
        <end position="1369"/>
    </location>
</feature>
<feature type="domain" description="RdRp catalytic" evidence="14">
    <location>
        <begin position="2634"/>
        <end position="2752"/>
    </location>
</feature>
<feature type="region of interest" description="Disordered" evidence="6">
    <location>
        <begin position="2"/>
        <end position="75"/>
    </location>
</feature>
<feature type="region of interest" description="Interaction with DDX3X" evidence="9">
    <location>
        <begin position="2"/>
        <end position="59"/>
    </location>
</feature>
<feature type="region of interest" description="Interaction with EIF2AK2/PKR" evidence="3">
    <location>
        <begin position="2"/>
        <end position="58"/>
    </location>
</feature>
<feature type="region of interest" description="Interaction with STAT1" evidence="3">
    <location>
        <begin position="2"/>
        <end position="23"/>
    </location>
</feature>
<feature type="region of interest" description="Important for endoplasmic reticulum and mitochondrial localization" evidence="3">
    <location>
        <begin position="112"/>
        <end position="152"/>
    </location>
</feature>
<feature type="region of interest" description="Interaction with APOA2" evidence="7">
    <location>
        <begin position="122"/>
        <end position="173"/>
    </location>
</feature>
<feature type="region of interest" description="Important for lipid droplets localization" evidence="6">
    <location>
        <begin position="164"/>
        <end position="167"/>
    </location>
</feature>
<feature type="region of interest" description="Important for fusion" evidence="6">
    <location>
        <begin position="265"/>
        <end position="296"/>
    </location>
</feature>
<feature type="region of interest" description="HVR1" evidence="6">
    <location>
        <begin position="385"/>
        <end position="411"/>
    </location>
</feature>
<feature type="region of interest" description="HVR2" evidence="6">
    <location>
        <begin position="474"/>
        <end position="479"/>
    </location>
</feature>
<feature type="region of interest" description="CD81-binding 1" evidence="4">
    <location>
        <begin position="480"/>
        <end position="493"/>
    </location>
</feature>
<feature type="region of interest" description="CD81-binding 2" evidence="4">
    <location>
        <begin position="544"/>
        <end position="551"/>
    </location>
</feature>
<feature type="region of interest" description="PKR/eIF2-alpha phosphorylation homology domain (PePHD)" evidence="1">
    <location>
        <begin position="660"/>
        <end position="671"/>
    </location>
</feature>
<feature type="region of interest" description="Protease NS2-3" evidence="4">
    <location>
        <begin position="904"/>
        <end position="1206"/>
    </location>
</feature>
<feature type="region of interest" description="Interaction with host SCPS1" evidence="11">
    <location>
        <begin position="929"/>
        <end position="949"/>
    </location>
</feature>
<feature type="region of interest" description="RNA-binding" evidence="4">
    <location>
        <begin position="1486"/>
        <end position="1497"/>
    </location>
</feature>
<feature type="region of interest" description="NS3-binding" evidence="6">
    <location>
        <begin position="1679"/>
        <end position="1690"/>
    </location>
</feature>
<feature type="region of interest" description="Transcriptional activation" evidence="13">
    <location>
        <begin position="2120"/>
        <end position="2332"/>
    </location>
</feature>
<feature type="region of interest" description="FKBP8-binding" evidence="3">
    <location>
        <begin position="2120"/>
        <end position="2208"/>
    </location>
</feature>
<feature type="region of interest" description="Interaction with non-structural protein 4A" evidence="3">
    <location>
        <begin position="2135"/>
        <end position="2139"/>
    </location>
</feature>
<feature type="region of interest" description="Disordered" evidence="18">
    <location>
        <begin position="2187"/>
        <end position="2207"/>
    </location>
</feature>
<feature type="region of interest" description="Interaction with host SKP2" evidence="6">
    <location>
        <begin position="2189"/>
        <end position="2441"/>
    </location>
</feature>
<feature type="region of interest" description="Interaction with EIF2AK2/PKR" evidence="4">
    <location>
        <begin position="2210"/>
        <end position="2275"/>
    </location>
</feature>
<feature type="region of interest" description="ISDR" evidence="3">
    <location>
        <begin position="2210"/>
        <end position="2249"/>
    </location>
</feature>
<feature type="region of interest" description="NS4B-binding" evidence="13">
    <location>
        <begin position="2249"/>
        <end position="2306"/>
    </location>
</feature>
<feature type="region of interest" description="Disordered" evidence="18">
    <location>
        <begin position="2312"/>
        <end position="2334"/>
    </location>
</feature>
<feature type="region of interest" description="Disordered" evidence="18">
    <location>
        <begin position="2351"/>
        <end position="2408"/>
    </location>
</feature>
<feature type="region of interest" description="V3" evidence="1">
    <location>
        <begin position="2354"/>
        <end position="2377"/>
    </location>
</feature>
<feature type="short sequence motif" description="Nuclear localization signal" evidence="11">
    <location>
        <begin position="5"/>
        <end position="13"/>
    </location>
</feature>
<feature type="short sequence motif" description="Nuclear localization signal" evidence="11">
    <location>
        <begin position="38"/>
        <end position="43"/>
    </location>
</feature>
<feature type="short sequence motif" description="Nuclear localization signal" evidence="11">
    <location>
        <begin position="58"/>
        <end position="64"/>
    </location>
</feature>
<feature type="short sequence motif" description="Nuclear localization signal" evidence="11">
    <location>
        <begin position="66"/>
        <end position="71"/>
    </location>
</feature>
<feature type="short sequence motif" description="DECH box" evidence="11">
    <location>
        <begin position="1316"/>
        <end position="1319"/>
    </location>
</feature>
<feature type="short sequence motif" description="SH3-binding" evidence="13">
    <location>
        <begin position="2322"/>
        <end position="2325"/>
    </location>
</feature>
<feature type="short sequence motif" description="Nuclear localization signal" evidence="3">
    <location>
        <begin position="2326"/>
        <end position="2334"/>
    </location>
</feature>
<feature type="compositionally biased region" description="Basic residues" evidence="18">
    <location>
        <begin position="7"/>
        <end position="16"/>
    </location>
</feature>
<feature type="compositionally biased region" description="Low complexity" evidence="18">
    <location>
        <begin position="32"/>
        <end position="47"/>
    </location>
</feature>
<feature type="compositionally biased region" description="Basic residues" evidence="18">
    <location>
        <begin position="58"/>
        <end position="68"/>
    </location>
</feature>
<feature type="compositionally biased region" description="Pro residues" evidence="18">
    <location>
        <begin position="2315"/>
        <end position="2326"/>
    </location>
</feature>
<feature type="compositionally biased region" description="Low complexity" evidence="18">
    <location>
        <begin position="2351"/>
        <end position="2369"/>
    </location>
</feature>
<feature type="active site" description="For protease NS2 activity; shared with dimeric partner" evidence="16">
    <location>
        <position position="952"/>
    </location>
</feature>
<feature type="active site" description="For protease NS2 activity; shared with dimeric partner" evidence="16">
    <location>
        <position position="972"/>
    </location>
</feature>
<feature type="active site" description="For protease NS2 activity; shared with dimeric partner" evidence="16">
    <location>
        <position position="993"/>
    </location>
</feature>
<feature type="active site" description="Charge relay system; for serine protease NS3 activity" evidence="17">
    <location>
        <position position="1083"/>
    </location>
</feature>
<feature type="active site" description="Charge relay system; for serine protease NS3 activity" evidence="17">
    <location>
        <position position="1107"/>
    </location>
</feature>
<feature type="active site" description="Charge relay system; for serine protease NS3 activity" evidence="17">
    <location>
        <position position="1165"/>
    </location>
</feature>
<feature type="binding site" evidence="17">
    <location>
        <position position="1123"/>
    </location>
    <ligand>
        <name>Zn(2+)</name>
        <dbReference type="ChEBI" id="CHEBI:29105"/>
        <label>1</label>
        <note>structural; for NS3 protease activity and NS2/3 auto-cleavage activity</note>
    </ligand>
</feature>
<feature type="binding site" evidence="17">
    <location>
        <position position="1125"/>
    </location>
    <ligand>
        <name>Zn(2+)</name>
        <dbReference type="ChEBI" id="CHEBI:29105"/>
        <label>1</label>
        <note>structural; for NS3 protease activity and NS2/3 auto-cleavage activity</note>
    </ligand>
</feature>
<feature type="binding site" evidence="17">
    <location>
        <position position="1171"/>
    </location>
    <ligand>
        <name>Zn(2+)</name>
        <dbReference type="ChEBI" id="CHEBI:29105"/>
        <label>1</label>
        <note>structural; for NS3 protease activity and NS2/3 auto-cleavage activity</note>
    </ligand>
</feature>
<feature type="binding site" evidence="17">
    <location>
        <position position="1175"/>
    </location>
    <ligand>
        <name>Zn(2+)</name>
        <dbReference type="ChEBI" id="CHEBI:29105"/>
        <label>1</label>
        <note>structural; for NS3 protease activity and NS2/3 auto-cleavage activity</note>
    </ligand>
</feature>
<feature type="binding site" evidence="15">
    <location>
        <begin position="1230"/>
        <end position="1237"/>
    </location>
    <ligand>
        <name>ATP</name>
        <dbReference type="ChEBI" id="CHEBI:30616"/>
    </ligand>
</feature>
<feature type="binding site" evidence="12">
    <location>
        <position position="1237"/>
    </location>
    <ligand>
        <name>Mg(2+)</name>
        <dbReference type="ChEBI" id="CHEBI:18420"/>
        <label>1</label>
        <note>catalytic; for NS3 helicase activity</note>
    </ligand>
</feature>
<feature type="binding site" evidence="12">
    <location>
        <position position="1317"/>
    </location>
    <ligand>
        <name>Mg(2+)</name>
        <dbReference type="ChEBI" id="CHEBI:18420"/>
        <label>1</label>
        <note>catalytic; for NS3 helicase activity</note>
    </ligand>
</feature>
<feature type="binding site" evidence="12">
    <location>
        <position position="2011"/>
    </location>
    <ligand>
        <name>Zn(2+)</name>
        <dbReference type="ChEBI" id="CHEBI:29105"/>
        <label>2</label>
        <note>structural</note>
    </ligand>
</feature>
<feature type="binding site" evidence="12">
    <location>
        <position position="2029"/>
    </location>
    <ligand>
        <name>Zn(2+)</name>
        <dbReference type="ChEBI" id="CHEBI:29105"/>
        <label>2</label>
        <note>structural</note>
    </ligand>
</feature>
<feature type="binding site" evidence="12">
    <location>
        <position position="2031"/>
    </location>
    <ligand>
        <name>Zn(2+)</name>
        <dbReference type="ChEBI" id="CHEBI:29105"/>
        <label>2</label>
        <note>structural</note>
    </ligand>
</feature>
<feature type="binding site" evidence="12">
    <location>
        <position position="2052"/>
    </location>
    <ligand>
        <name>Zn(2+)</name>
        <dbReference type="ChEBI" id="CHEBI:29105"/>
        <label>2</label>
        <note>structural</note>
    </ligand>
</feature>
<feature type="binding site" evidence="4">
    <location>
        <position position="2640"/>
    </location>
    <ligand>
        <name>Mg(2+)</name>
        <dbReference type="ChEBI" id="CHEBI:18420"/>
        <label>2</label>
        <note>catalytic; for RNA-directed RNA polymerase activity</note>
    </ligand>
</feature>
<feature type="binding site" evidence="4">
    <location>
        <position position="2738"/>
    </location>
    <ligand>
        <name>Mg(2+)</name>
        <dbReference type="ChEBI" id="CHEBI:18420"/>
        <label>2</label>
        <note>catalytic; for RNA-directed RNA polymerase activity</note>
    </ligand>
</feature>
<feature type="binding site" evidence="4">
    <location>
        <position position="2739"/>
    </location>
    <ligand>
        <name>Mg(2+)</name>
        <dbReference type="ChEBI" id="CHEBI:18420"/>
        <label>2</label>
        <note>catalytic; for RNA-directed RNA polymerase activity</note>
    </ligand>
</feature>
<feature type="site" description="Cleavage; by host signal peptide peptidase" evidence="3">
    <location>
        <begin position="177"/>
        <end position="178"/>
    </location>
</feature>
<feature type="site" description="Cleavage; by host signal peptidase" evidence="3">
    <location>
        <begin position="191"/>
        <end position="192"/>
    </location>
</feature>
<feature type="site" description="Cleavage; by host signal peptidase" evidence="3">
    <location>
        <begin position="383"/>
        <end position="384"/>
    </location>
</feature>
<feature type="site" description="Cleavage; by host signal peptidase" evidence="1">
    <location>
        <begin position="746"/>
        <end position="747"/>
    </location>
</feature>
<feature type="site" description="Cleavage; by host signal peptidase" evidence="1">
    <location>
        <begin position="809"/>
        <end position="810"/>
    </location>
</feature>
<feature type="site" description="Cleavage; by protease NS2" evidence="16">
    <location>
        <begin position="1026"/>
        <end position="1027"/>
    </location>
</feature>
<feature type="site" description="Cleavage; by serine protease/helicase NS3" evidence="6">
    <location>
        <begin position="1657"/>
        <end position="1658"/>
    </location>
</feature>
<feature type="site" description="Cleavage; by serine protease/helicase NS3" evidence="6">
    <location>
        <begin position="1711"/>
        <end position="1712"/>
    </location>
</feature>
<feature type="site" description="CCleavage; by serine protease/helicase NS3" evidence="6">
    <location>
        <begin position="1972"/>
        <end position="1973"/>
    </location>
</feature>
<feature type="site" description="Cleavage; by serine protease/helicase NS3" evidence="6">
    <location>
        <begin position="2420"/>
        <end position="2421"/>
    </location>
</feature>
<feature type="modified residue" description="N-acetylserine; by host" evidence="10">
    <location>
        <position position="2"/>
    </location>
</feature>
<feature type="modified residue" description="Phosphoserine; by host" evidence="8">
    <location>
        <position position="53"/>
    </location>
</feature>
<feature type="modified residue" description="Phosphoserine; by host" evidence="8">
    <location>
        <position position="99"/>
    </location>
</feature>
<feature type="modified residue" description="Phosphoserine; by host PKA" evidence="8">
    <location>
        <position position="116"/>
    </location>
</feature>
<feature type="modified residue" description="Phosphoserine; by host; in p56" evidence="12">
    <location>
        <position position="2194"/>
    </location>
</feature>
<feature type="modified residue" description="Phosphoserine; by host; in p58" evidence="12">
    <location>
        <position position="2197"/>
    </location>
</feature>
<feature type="modified residue" description="Phosphoserine; by host; in p58" evidence="12">
    <location>
        <position position="2201"/>
    </location>
</feature>
<feature type="modified residue" description="Phosphoserine; by host; in p58" evidence="12">
    <location>
        <position position="2204"/>
    </location>
</feature>
<feature type="modified residue" description="Phosphoserine; by host; in p58" evidence="11">
    <location>
        <position position="2207"/>
    </location>
</feature>
<feature type="modified residue" description="Phosphoserine; by host; in p58" evidence="11">
    <location>
        <position position="2210"/>
    </location>
</feature>
<feature type="modified residue" description="Phosphoserine; by host" evidence="3">
    <location>
        <position position="2449"/>
    </location>
</feature>
<feature type="modified residue" description="Phosphoserine; by host" evidence="3">
    <location>
        <position position="2462"/>
    </location>
</feature>
<feature type="lipid moiety-binding region" description="S-palmitoyl cysteine; by host" evidence="6">
    <location>
        <position position="922"/>
    </location>
</feature>
<feature type="lipid moiety-binding region" description="S-palmitoyl cysteine; by host" evidence="6">
    <location>
        <position position="1972"/>
    </location>
</feature>
<feature type="glycosylation site" description="N-linked (GlcNAc...) asparagine; by host" evidence="6">
    <location>
        <position position="196"/>
    </location>
</feature>
<feature type="glycosylation site" description="N-linked (GlcNAc...) asparagine; by host" evidence="6">
    <location>
        <position position="209"/>
    </location>
</feature>
<feature type="glycosylation site" description="N-linked (GlcNAc...) asparagine; by host" evidence="6">
    <location>
        <position position="234"/>
    </location>
</feature>
<feature type="glycosylation site" description="N-linked (GlcNAc...) asparagine; by host" evidence="13">
    <location>
        <position position="305"/>
    </location>
</feature>
<feature type="glycosylation site" description="N-linked (GlcNAc...) (high mannose) asparagine; by host" evidence="6">
    <location>
        <position position="417"/>
    </location>
</feature>
<feature type="glycosylation site" description="N-linked (GlcNAc...) (high mannose) asparagine; by host" evidence="6">
    <location>
        <position position="423"/>
    </location>
</feature>
<feature type="glycosylation site" description="N-linked (GlcNAc...) (high mannose) asparagine; by host" evidence="6">
    <location>
        <position position="430"/>
    </location>
</feature>
<feature type="glycosylation site" description="N-linked (GlcNAc...) (high mannose) asparagine; by host" evidence="6">
    <location>
        <position position="448"/>
    </location>
</feature>
<feature type="glycosylation site" description="N-linked (GlcNAc...) (high mannose) asparagine; by host" evidence="6">
    <location>
        <position position="532"/>
    </location>
</feature>
<feature type="glycosylation site" description="N-linked (GlcNAc...) asparagine; by host" evidence="13">
    <location>
        <position position="540"/>
    </location>
</feature>
<feature type="glycosylation site" description="N-linked (GlcNAc...) (high mannose) asparagine; by host" evidence="6">
    <location>
        <position position="556"/>
    </location>
</feature>
<feature type="glycosylation site" description="N-linked (GlcNAc...) (high mannose) asparagine; by host" evidence="6">
    <location>
        <position position="576"/>
    </location>
</feature>
<feature type="glycosylation site" description="N-linked (GlcNAc...) (high mannose) asparagine; by host" evidence="6">
    <location>
        <position position="623"/>
    </location>
</feature>
<feature type="glycosylation site" description="N-linked (GlcNAc...) (high mannose) asparagine; by host" evidence="6">
    <location>
        <position position="645"/>
    </location>
</feature>
<feature type="disulfide bond" evidence="6">
    <location>
        <begin position="429"/>
        <end position="552"/>
    </location>
</feature>
<feature type="disulfide bond" evidence="6">
    <location>
        <begin position="452"/>
        <end position="459"/>
    </location>
</feature>
<feature type="disulfide bond" evidence="6">
    <location>
        <begin position="486"/>
        <end position="494"/>
    </location>
</feature>
<feature type="disulfide bond" evidence="6">
    <location>
        <begin position="503"/>
        <end position="508"/>
    </location>
</feature>
<feature type="disulfide bond" evidence="6">
    <location>
        <begin position="564"/>
        <end position="569"/>
    </location>
</feature>
<feature type="disulfide bond" evidence="6">
    <location>
        <begin position="581"/>
        <end position="585"/>
    </location>
</feature>
<feature type="disulfide bond" evidence="6">
    <location>
        <begin position="597"/>
        <end position="620"/>
    </location>
</feature>
<feature type="disulfide bond" evidence="6">
    <location>
        <begin position="607"/>
        <end position="644"/>
    </location>
</feature>
<feature type="disulfide bond" evidence="6">
    <location>
        <begin position="652"/>
        <end position="677"/>
    </location>
</feature>
<feature type="cross-link" description="Glycyl lysine isopeptide (Lys-Gly) (interchain with G-Cter in ubiquitin)" evidence="6">
    <location>
        <position position="2350"/>
    </location>
</feature>
<feature type="helix" evidence="21">
    <location>
        <begin position="319"/>
        <end position="321"/>
    </location>
</feature>
<feature type="helix" evidence="21">
    <location>
        <begin position="331"/>
        <end position="337"/>
    </location>
</feature>